<name>ITCH_HUMAN</name>
<proteinExistence type="evidence at protein level"/>
<dbReference type="EC" id="2.3.2.26" evidence="11 13 15 17 18 19 24"/>
<dbReference type="EMBL" id="AF095745">
    <property type="protein sequence ID" value="AAK39399.1"/>
    <property type="molecule type" value="mRNA"/>
</dbReference>
<dbReference type="EMBL" id="AB056663">
    <property type="protein sequence ID" value="BAB39389.1"/>
    <property type="molecule type" value="mRNA"/>
</dbReference>
<dbReference type="EMBL" id="AK304090">
    <property type="protein sequence ID" value="BAG64996.1"/>
    <property type="molecule type" value="mRNA"/>
</dbReference>
<dbReference type="EMBL" id="AK315212">
    <property type="protein sequence ID" value="BAG37647.1"/>
    <property type="molecule type" value="mRNA"/>
</dbReference>
<dbReference type="EMBL" id="AL109923">
    <property type="status" value="NOT_ANNOTATED_CDS"/>
    <property type="molecule type" value="Genomic_DNA"/>
</dbReference>
<dbReference type="EMBL" id="AL356299">
    <property type="status" value="NOT_ANNOTATED_CDS"/>
    <property type="molecule type" value="Genomic_DNA"/>
</dbReference>
<dbReference type="EMBL" id="CH471077">
    <property type="protein sequence ID" value="EAW76272.1"/>
    <property type="molecule type" value="Genomic_DNA"/>
</dbReference>
<dbReference type="EMBL" id="CH471077">
    <property type="protein sequence ID" value="EAW76274.1"/>
    <property type="molecule type" value="Genomic_DNA"/>
</dbReference>
<dbReference type="EMBL" id="CH471077">
    <property type="protein sequence ID" value="EAW76276.1"/>
    <property type="molecule type" value="Genomic_DNA"/>
</dbReference>
<dbReference type="EMBL" id="BC006848">
    <property type="protein sequence ID" value="AAH06848.1"/>
    <property type="molecule type" value="mRNA"/>
</dbReference>
<dbReference type="EMBL" id="BC011571">
    <property type="protein sequence ID" value="AAH11571.1"/>
    <property type="molecule type" value="mRNA"/>
</dbReference>
<dbReference type="EMBL" id="AF038564">
    <property type="protein sequence ID" value="AAC04845.1"/>
    <property type="molecule type" value="mRNA"/>
</dbReference>
<dbReference type="CCDS" id="CCDS13234.1">
    <molecule id="Q96J02-2"/>
</dbReference>
<dbReference type="CCDS" id="CCDS58768.1">
    <molecule id="Q96J02-1"/>
</dbReference>
<dbReference type="CCDS" id="CCDS58769.1">
    <molecule id="Q96J02-3"/>
</dbReference>
<dbReference type="RefSeq" id="NP_001244066.1">
    <molecule id="Q96J02-1"/>
    <property type="nucleotide sequence ID" value="NM_001257137.3"/>
</dbReference>
<dbReference type="RefSeq" id="NP_001244067.1">
    <molecule id="Q96J02-3"/>
    <property type="nucleotide sequence ID" value="NM_001257138.3"/>
</dbReference>
<dbReference type="RefSeq" id="NP_001311126.1">
    <molecule id="Q96J02-1"/>
    <property type="nucleotide sequence ID" value="NM_001324197.2"/>
</dbReference>
<dbReference type="RefSeq" id="NP_001311127.1">
    <molecule id="Q96J02-2"/>
    <property type="nucleotide sequence ID" value="NM_001324198.2"/>
</dbReference>
<dbReference type="RefSeq" id="NP_113671.3">
    <molecule id="Q96J02-2"/>
    <property type="nucleotide sequence ID" value="NM_031483.6"/>
</dbReference>
<dbReference type="RefSeq" id="XP_016883578.1">
    <molecule id="Q96J02-1"/>
    <property type="nucleotide sequence ID" value="XM_017028089.2"/>
</dbReference>
<dbReference type="RefSeq" id="XP_016883580.1">
    <property type="nucleotide sequence ID" value="XM_017028091.1"/>
</dbReference>
<dbReference type="RefSeq" id="XP_024307773.1">
    <molecule id="Q96J02-1"/>
    <property type="nucleotide sequence ID" value="XM_024452005.2"/>
</dbReference>
<dbReference type="RefSeq" id="XP_047296488.1">
    <molecule id="Q96J02-2"/>
    <property type="nucleotide sequence ID" value="XM_047440532.1"/>
</dbReference>
<dbReference type="RefSeq" id="XP_047296491.1">
    <molecule id="Q96J02-3"/>
    <property type="nucleotide sequence ID" value="XM_047440535.1"/>
</dbReference>
<dbReference type="RefSeq" id="XP_054180074.1">
    <molecule id="Q96J02-1"/>
    <property type="nucleotide sequence ID" value="XM_054324099.1"/>
</dbReference>
<dbReference type="RefSeq" id="XP_054180075.1">
    <molecule id="Q96J02-1"/>
    <property type="nucleotide sequence ID" value="XM_054324100.1"/>
</dbReference>
<dbReference type="RefSeq" id="XP_054180076.1">
    <molecule id="Q96J02-2"/>
    <property type="nucleotide sequence ID" value="XM_054324101.1"/>
</dbReference>
<dbReference type="RefSeq" id="XP_054180079.1">
    <molecule id="Q96J02-3"/>
    <property type="nucleotide sequence ID" value="XM_054324104.1"/>
</dbReference>
<dbReference type="PDB" id="2DMV">
    <property type="method" value="NMR"/>
    <property type="chains" value="A=328-357"/>
</dbReference>
<dbReference type="PDB" id="2KYK">
    <property type="method" value="NMR"/>
    <property type="chains" value="A=359-392"/>
</dbReference>
<dbReference type="PDB" id="2NQ3">
    <property type="method" value="X-ray"/>
    <property type="resolution" value="1.80 A"/>
    <property type="chains" value="A=1-155"/>
</dbReference>
<dbReference type="PDB" id="2P4R">
    <property type="method" value="X-ray"/>
    <property type="resolution" value="2.00 A"/>
    <property type="chains" value="T=246-270"/>
</dbReference>
<dbReference type="PDB" id="2YSF">
    <property type="method" value="NMR"/>
    <property type="chains" value="A=480-512"/>
</dbReference>
<dbReference type="PDB" id="3TUG">
    <property type="method" value="X-ray"/>
    <property type="resolution" value="2.27 A"/>
    <property type="chains" value="A=524-903"/>
</dbReference>
<dbReference type="PDB" id="4ROF">
    <property type="method" value="X-ray"/>
    <property type="resolution" value="2.03 A"/>
    <property type="chains" value="A/B=436-474"/>
</dbReference>
<dbReference type="PDB" id="5C7M">
    <property type="method" value="X-ray"/>
    <property type="resolution" value="3.03 A"/>
    <property type="chains" value="A=524-899"/>
</dbReference>
<dbReference type="PDB" id="5CQ2">
    <property type="method" value="X-ray"/>
    <property type="resolution" value="1.40 A"/>
    <property type="chains" value="A=433-521"/>
</dbReference>
<dbReference type="PDB" id="5DWS">
    <property type="method" value="X-ray"/>
    <property type="resolution" value="1.65 A"/>
    <property type="chains" value="A/C/E/G=436-474"/>
</dbReference>
<dbReference type="PDB" id="5DZD">
    <property type="method" value="X-ray"/>
    <property type="resolution" value="1.57 A"/>
    <property type="chains" value="A/B=475-514"/>
</dbReference>
<dbReference type="PDB" id="5SXP">
    <property type="method" value="X-ray"/>
    <property type="resolution" value="1.65 A"/>
    <property type="chains" value="F/G=249-269"/>
</dbReference>
<dbReference type="PDBsum" id="2DMV"/>
<dbReference type="PDBsum" id="2KYK"/>
<dbReference type="PDBsum" id="2NQ3"/>
<dbReference type="PDBsum" id="2P4R"/>
<dbReference type="PDBsum" id="2YSF"/>
<dbReference type="PDBsum" id="3TUG"/>
<dbReference type="PDBsum" id="4ROF"/>
<dbReference type="PDBsum" id="5C7M"/>
<dbReference type="PDBsum" id="5CQ2"/>
<dbReference type="PDBsum" id="5DWS"/>
<dbReference type="PDBsum" id="5DZD"/>
<dbReference type="PDBsum" id="5SXP"/>
<dbReference type="SMR" id="Q96J02"/>
<dbReference type="BioGRID" id="123747">
    <property type="interactions" value="390"/>
</dbReference>
<dbReference type="CORUM" id="Q96J02"/>
<dbReference type="DIP" id="DIP-29849N"/>
<dbReference type="ELM" id="Q96J02"/>
<dbReference type="FunCoup" id="Q96J02">
    <property type="interactions" value="3638"/>
</dbReference>
<dbReference type="IntAct" id="Q96J02">
    <property type="interactions" value="121"/>
</dbReference>
<dbReference type="MINT" id="Q96J02"/>
<dbReference type="STRING" id="9606.ENSP00000499786"/>
<dbReference type="ChEMBL" id="CHEMBL4295925"/>
<dbReference type="GlyGen" id="Q96J02">
    <property type="glycosylation" value="2 sites, 1 O-linked glycan (1 site)"/>
</dbReference>
<dbReference type="iPTMnet" id="Q96J02"/>
<dbReference type="PhosphoSitePlus" id="Q96J02"/>
<dbReference type="SwissPalm" id="Q96J02"/>
<dbReference type="BioMuta" id="ITCH"/>
<dbReference type="DMDM" id="37537897"/>
<dbReference type="jPOST" id="Q96J02"/>
<dbReference type="MassIVE" id="Q96J02"/>
<dbReference type="PaxDb" id="9606-ENSP00000480499"/>
<dbReference type="PeptideAtlas" id="Q96J02"/>
<dbReference type="ProteomicsDB" id="25826"/>
<dbReference type="ProteomicsDB" id="76882">
    <molecule id="Q96J02-1"/>
</dbReference>
<dbReference type="ProteomicsDB" id="76883">
    <molecule id="Q96J02-2"/>
</dbReference>
<dbReference type="Pumba" id="Q96J02"/>
<dbReference type="Antibodypedia" id="10897">
    <property type="antibodies" value="340 antibodies from 41 providers"/>
</dbReference>
<dbReference type="CPTC" id="Q96J02">
    <property type="antibodies" value="3 antibodies"/>
</dbReference>
<dbReference type="DNASU" id="83737"/>
<dbReference type="Ensembl" id="ENST00000262650.11">
    <molecule id="Q96J02-1"/>
    <property type="protein sequence ID" value="ENSP00000262650.5"/>
    <property type="gene ID" value="ENSG00000078747.17"/>
</dbReference>
<dbReference type="Ensembl" id="ENST00000374864.10">
    <molecule id="Q96J02-2"/>
    <property type="protein sequence ID" value="ENSP00000363998.4"/>
    <property type="gene ID" value="ENSG00000078747.17"/>
</dbReference>
<dbReference type="Ensembl" id="ENST00000535650.8">
    <molecule id="Q96J02-3"/>
    <property type="protein sequence ID" value="ENSP00000445608.1"/>
    <property type="gene ID" value="ENSG00000078747.17"/>
</dbReference>
<dbReference type="Ensembl" id="ENST00000665346.1">
    <molecule id="Q96J02-1"/>
    <property type="protein sequence ID" value="ENSP00000499786.1"/>
    <property type="gene ID" value="ENSG00000078747.17"/>
</dbReference>
<dbReference type="Ensembl" id="ENST00000696974.1">
    <molecule id="Q96J02-2"/>
    <property type="protein sequence ID" value="ENSP00000513011.1"/>
    <property type="gene ID" value="ENSG00000078747.17"/>
</dbReference>
<dbReference type="GeneID" id="83737"/>
<dbReference type="KEGG" id="hsa:83737"/>
<dbReference type="MANE-Select" id="ENST00000374864.10">
    <molecule id="Q96J02-2"/>
    <property type="protein sequence ID" value="ENSP00000363998.4"/>
    <property type="RefSeq nucleotide sequence ID" value="NM_031483.7"/>
    <property type="RefSeq protein sequence ID" value="NP_113671.3"/>
</dbReference>
<dbReference type="UCSC" id="uc002xak.3">
    <molecule id="Q96J02-1"/>
    <property type="organism name" value="human"/>
</dbReference>
<dbReference type="AGR" id="HGNC:13890"/>
<dbReference type="CTD" id="83737"/>
<dbReference type="DisGeNET" id="83737"/>
<dbReference type="GeneCards" id="ITCH"/>
<dbReference type="HGNC" id="HGNC:13890">
    <property type="gene designation" value="ITCH"/>
</dbReference>
<dbReference type="HPA" id="ENSG00000078747">
    <property type="expression patterns" value="Low tissue specificity"/>
</dbReference>
<dbReference type="MalaCards" id="ITCH"/>
<dbReference type="MIM" id="606409">
    <property type="type" value="gene"/>
</dbReference>
<dbReference type="MIM" id="613385">
    <property type="type" value="phenotype"/>
</dbReference>
<dbReference type="neXtProt" id="NX_Q96J02"/>
<dbReference type="OpenTargets" id="ENSG00000078747"/>
<dbReference type="Orphanet" id="228426">
    <property type="disease" value="Syndromic multisystem autoimmune disease due to Itch deficiency"/>
</dbReference>
<dbReference type="PharmGKB" id="PA29934"/>
<dbReference type="VEuPathDB" id="HostDB:ENSG00000078747"/>
<dbReference type="eggNOG" id="KOG0940">
    <property type="taxonomic scope" value="Eukaryota"/>
</dbReference>
<dbReference type="GeneTree" id="ENSGT00940000157014"/>
<dbReference type="HOGENOM" id="CLU_002173_0_1_1"/>
<dbReference type="InParanoid" id="Q96J02"/>
<dbReference type="OMA" id="WKRPTLD"/>
<dbReference type="OrthoDB" id="423283at2759"/>
<dbReference type="PAN-GO" id="Q96J02">
    <property type="GO annotations" value="6 GO annotations based on evolutionary models"/>
</dbReference>
<dbReference type="PhylomeDB" id="Q96J02"/>
<dbReference type="TreeFam" id="TF323658"/>
<dbReference type="BRENDA" id="2.3.2.26">
    <property type="organism ID" value="2681"/>
</dbReference>
<dbReference type="BRENDA" id="2.3.2.B8">
    <property type="organism ID" value="2681"/>
</dbReference>
<dbReference type="PathwayCommons" id="Q96J02"/>
<dbReference type="Reactome" id="R-HSA-1253288">
    <property type="pathway name" value="Downregulation of ERBB4 signaling"/>
</dbReference>
<dbReference type="Reactome" id="R-HSA-168638">
    <property type="pathway name" value="NOD1/2 Signaling Pathway"/>
</dbReference>
<dbReference type="Reactome" id="R-HSA-2122948">
    <property type="pathway name" value="Activated NOTCH1 Transmits Signal to the Nucleus"/>
</dbReference>
<dbReference type="Reactome" id="R-HSA-5610780">
    <property type="pathway name" value="Degradation of GLI1 by the proteasome"/>
</dbReference>
<dbReference type="Reactome" id="R-HSA-5632684">
    <property type="pathway name" value="Hedgehog 'on' state"/>
</dbReference>
<dbReference type="Reactome" id="R-HSA-5675482">
    <property type="pathway name" value="Regulation of necroptotic cell death"/>
</dbReference>
<dbReference type="Reactome" id="R-HSA-8939236">
    <property type="pathway name" value="RUNX1 regulates transcription of genes involved in differentiation of HSCs"/>
</dbReference>
<dbReference type="Reactome" id="R-HSA-936440">
    <property type="pathway name" value="Negative regulators of DDX58/IFIH1 signaling"/>
</dbReference>
<dbReference type="Reactome" id="R-HSA-9692916">
    <property type="pathway name" value="SARS-CoV-1 activates/modulates innate immune responses"/>
</dbReference>
<dbReference type="Reactome" id="R-HSA-983168">
    <property type="pathway name" value="Antigen processing: Ubiquitination &amp; Proteasome degradation"/>
</dbReference>
<dbReference type="SignaLink" id="Q96J02"/>
<dbReference type="SIGNOR" id="Q96J02"/>
<dbReference type="UniPathway" id="UPA00143"/>
<dbReference type="BioGRID-ORCS" id="83737">
    <property type="hits" value="18 hits in 1208 CRISPR screens"/>
</dbReference>
<dbReference type="ChiTaRS" id="ITCH">
    <property type="organism name" value="human"/>
</dbReference>
<dbReference type="EvolutionaryTrace" id="Q96J02"/>
<dbReference type="GenomeRNAi" id="83737"/>
<dbReference type="Pharos" id="Q96J02">
    <property type="development level" value="Tbio"/>
</dbReference>
<dbReference type="PRO" id="PR:Q96J02"/>
<dbReference type="Proteomes" id="UP000005640">
    <property type="component" value="Chromosome 20"/>
</dbReference>
<dbReference type="RNAct" id="Q96J02">
    <property type="molecule type" value="protein"/>
</dbReference>
<dbReference type="Bgee" id="ENSG00000078747">
    <property type="expression patterns" value="Expressed in sperm and 188 other cell types or tissues"/>
</dbReference>
<dbReference type="ExpressionAtlas" id="Q96J02">
    <property type="expression patterns" value="baseline and differential"/>
</dbReference>
<dbReference type="GO" id="GO:0005938">
    <property type="term" value="C:cell cortex"/>
    <property type="evidence" value="ECO:0007669"/>
    <property type="project" value="Ensembl"/>
</dbReference>
<dbReference type="GO" id="GO:0005737">
    <property type="term" value="C:cytoplasm"/>
    <property type="evidence" value="ECO:0000318"/>
    <property type="project" value="GO_Central"/>
</dbReference>
<dbReference type="GO" id="GO:0031410">
    <property type="term" value="C:cytoplasmic vesicle"/>
    <property type="evidence" value="ECO:0000314"/>
    <property type="project" value="ARUK-UCL"/>
</dbReference>
<dbReference type="GO" id="GO:0005829">
    <property type="term" value="C:cytosol"/>
    <property type="evidence" value="ECO:0000304"/>
    <property type="project" value="Reactome"/>
</dbReference>
<dbReference type="GO" id="GO:0031901">
    <property type="term" value="C:early endosome membrane"/>
    <property type="evidence" value="ECO:0007669"/>
    <property type="project" value="UniProtKB-SubCell"/>
</dbReference>
<dbReference type="GO" id="GO:0070062">
    <property type="term" value="C:extracellular exosome"/>
    <property type="evidence" value="ECO:0007005"/>
    <property type="project" value="UniProtKB"/>
</dbReference>
<dbReference type="GO" id="GO:0043231">
    <property type="term" value="C:intracellular membrane-bounded organelle"/>
    <property type="evidence" value="ECO:0000314"/>
    <property type="project" value="HPA"/>
</dbReference>
<dbReference type="GO" id="GO:0016020">
    <property type="term" value="C:membrane"/>
    <property type="evidence" value="ECO:0007005"/>
    <property type="project" value="UniProtKB"/>
</dbReference>
<dbReference type="GO" id="GO:0005739">
    <property type="term" value="C:mitochondrion"/>
    <property type="evidence" value="ECO:0000305"/>
    <property type="project" value="UniProt"/>
</dbReference>
<dbReference type="GO" id="GO:0005654">
    <property type="term" value="C:nucleoplasm"/>
    <property type="evidence" value="ECO:0000314"/>
    <property type="project" value="HPA"/>
</dbReference>
<dbReference type="GO" id="GO:0005886">
    <property type="term" value="C:plasma membrane"/>
    <property type="evidence" value="ECO:0000314"/>
    <property type="project" value="UniProtKB"/>
</dbReference>
<dbReference type="GO" id="GO:0032991">
    <property type="term" value="C:protein-containing complex"/>
    <property type="evidence" value="ECO:0000314"/>
    <property type="project" value="UniProtKB"/>
</dbReference>
<dbReference type="GO" id="GO:1990763">
    <property type="term" value="F:arrestin family protein binding"/>
    <property type="evidence" value="ECO:0000353"/>
    <property type="project" value="UniProtKB"/>
</dbReference>
<dbReference type="GO" id="GO:0045236">
    <property type="term" value="F:CXCR chemokine receptor binding"/>
    <property type="evidence" value="ECO:0000353"/>
    <property type="project" value="UniProtKB"/>
</dbReference>
<dbReference type="GO" id="GO:0016874">
    <property type="term" value="F:ligase activity"/>
    <property type="evidence" value="ECO:0007669"/>
    <property type="project" value="Ensembl"/>
</dbReference>
<dbReference type="GO" id="GO:0043021">
    <property type="term" value="F:ribonucleoprotein complex binding"/>
    <property type="evidence" value="ECO:0000353"/>
    <property type="project" value="UniProtKB"/>
</dbReference>
<dbReference type="GO" id="GO:0061630">
    <property type="term" value="F:ubiquitin protein ligase activity"/>
    <property type="evidence" value="ECO:0000314"/>
    <property type="project" value="UniProtKB"/>
</dbReference>
<dbReference type="GO" id="GO:0044389">
    <property type="term" value="F:ubiquitin-like protein ligase binding"/>
    <property type="evidence" value="ECO:0000353"/>
    <property type="project" value="UniProtKB"/>
</dbReference>
<dbReference type="GO" id="GO:0019787">
    <property type="term" value="F:ubiquitin-like protein transferase activity"/>
    <property type="evidence" value="ECO:0000304"/>
    <property type="project" value="Reactome"/>
</dbReference>
<dbReference type="GO" id="GO:0004842">
    <property type="term" value="F:ubiquitin-protein transferase activity"/>
    <property type="evidence" value="ECO:0000269"/>
    <property type="project" value="Reactome"/>
</dbReference>
<dbReference type="GO" id="GO:0034450">
    <property type="term" value="F:ubiquitin-ubiquitin ligase activity"/>
    <property type="evidence" value="ECO:0000314"/>
    <property type="project" value="UniProt"/>
</dbReference>
<dbReference type="GO" id="GO:0006915">
    <property type="term" value="P:apoptotic process"/>
    <property type="evidence" value="ECO:0007669"/>
    <property type="project" value="UniProtKB-KW"/>
</dbReference>
<dbReference type="GO" id="GO:0035739">
    <property type="term" value="P:CD4-positive, alpha-beta T cell proliferation"/>
    <property type="evidence" value="ECO:0007669"/>
    <property type="project" value="Ensembl"/>
</dbReference>
<dbReference type="GO" id="GO:0051607">
    <property type="term" value="P:defense response to virus"/>
    <property type="evidence" value="ECO:0007669"/>
    <property type="project" value="UniProtKB-KW"/>
</dbReference>
<dbReference type="GO" id="GO:0006954">
    <property type="term" value="P:inflammatory response"/>
    <property type="evidence" value="ECO:0000303"/>
    <property type="project" value="UniProtKB"/>
</dbReference>
<dbReference type="GO" id="GO:0045087">
    <property type="term" value="P:innate immune response"/>
    <property type="evidence" value="ECO:0007669"/>
    <property type="project" value="UniProtKB-KW"/>
</dbReference>
<dbReference type="GO" id="GO:0043066">
    <property type="term" value="P:negative regulation of apoptotic process"/>
    <property type="evidence" value="ECO:0000315"/>
    <property type="project" value="UniProtKB"/>
</dbReference>
<dbReference type="GO" id="GO:0043124">
    <property type="term" value="P:negative regulation of canonical NF-kappaB signal transduction"/>
    <property type="evidence" value="ECO:0000250"/>
    <property type="project" value="BHF-UCL"/>
</dbReference>
<dbReference type="GO" id="GO:2000562">
    <property type="term" value="P:negative regulation of CD4-positive, alpha-beta T cell proliferation"/>
    <property type="evidence" value="ECO:0007669"/>
    <property type="project" value="Ensembl"/>
</dbReference>
<dbReference type="GO" id="GO:0039532">
    <property type="term" value="P:negative regulation of cytoplasmic pattern recognition receptor signaling pathway"/>
    <property type="evidence" value="ECO:0000314"/>
    <property type="project" value="UniProt"/>
</dbReference>
<dbReference type="GO" id="GO:0050687">
    <property type="term" value="P:negative regulation of defense response to virus"/>
    <property type="evidence" value="ECO:0000315"/>
    <property type="project" value="UniProtKB"/>
</dbReference>
<dbReference type="GO" id="GO:0046329">
    <property type="term" value="P:negative regulation of JNK cascade"/>
    <property type="evidence" value="ECO:0000250"/>
    <property type="project" value="BHF-UCL"/>
</dbReference>
<dbReference type="GO" id="GO:0032480">
    <property type="term" value="P:negative regulation of type I interferon production"/>
    <property type="evidence" value="ECO:0000304"/>
    <property type="project" value="Reactome"/>
</dbReference>
<dbReference type="GO" id="GO:0035872">
    <property type="term" value="P:nucleotide-binding domain, leucine rich repeat containing receptor signaling pathway"/>
    <property type="evidence" value="ECO:0000304"/>
    <property type="project" value="Reactome"/>
</dbReference>
<dbReference type="GO" id="GO:0045732">
    <property type="term" value="P:positive regulation of protein catabolic process"/>
    <property type="evidence" value="ECO:0007669"/>
    <property type="project" value="Ensembl"/>
</dbReference>
<dbReference type="GO" id="GO:2000646">
    <property type="term" value="P:positive regulation of receptor catabolic process"/>
    <property type="evidence" value="ECO:0000315"/>
    <property type="project" value="UniProtKB"/>
</dbReference>
<dbReference type="GO" id="GO:0002669">
    <property type="term" value="P:positive regulation of T cell anergy"/>
    <property type="evidence" value="ECO:0007669"/>
    <property type="project" value="Ensembl"/>
</dbReference>
<dbReference type="GO" id="GO:0043161">
    <property type="term" value="P:proteasome-mediated ubiquitin-dependent protein catabolic process"/>
    <property type="evidence" value="ECO:0000314"/>
    <property type="project" value="UniProtKB"/>
</dbReference>
<dbReference type="GO" id="GO:0051865">
    <property type="term" value="P:protein autoubiquitination"/>
    <property type="evidence" value="ECO:0000315"/>
    <property type="project" value="UniProtKB"/>
</dbReference>
<dbReference type="GO" id="GO:0141198">
    <property type="term" value="P:protein branched polyubiquitination"/>
    <property type="evidence" value="ECO:0000314"/>
    <property type="project" value="UniProtKB"/>
</dbReference>
<dbReference type="GO" id="GO:0035519">
    <property type="term" value="P:protein K29-linked ubiquitination"/>
    <property type="evidence" value="ECO:0000314"/>
    <property type="project" value="UniProtKB"/>
</dbReference>
<dbReference type="GO" id="GO:0070936">
    <property type="term" value="P:protein K48-linked ubiquitination"/>
    <property type="evidence" value="ECO:0000314"/>
    <property type="project" value="UniProtKB"/>
</dbReference>
<dbReference type="GO" id="GO:0070534">
    <property type="term" value="P:protein K63-linked ubiquitination"/>
    <property type="evidence" value="ECO:0000314"/>
    <property type="project" value="UniProtKB"/>
</dbReference>
<dbReference type="GO" id="GO:0006513">
    <property type="term" value="P:protein monoubiquitination"/>
    <property type="evidence" value="ECO:0000314"/>
    <property type="project" value="UniProtKB"/>
</dbReference>
<dbReference type="GO" id="GO:0016567">
    <property type="term" value="P:protein ubiquitination"/>
    <property type="evidence" value="ECO:0000314"/>
    <property type="project" value="UniProtKB"/>
</dbReference>
<dbReference type="GO" id="GO:0031623">
    <property type="term" value="P:receptor internalization"/>
    <property type="evidence" value="ECO:0000315"/>
    <property type="project" value="UniProt"/>
</dbReference>
<dbReference type="GO" id="GO:0001558">
    <property type="term" value="P:regulation of cell growth"/>
    <property type="evidence" value="ECO:0000303"/>
    <property type="project" value="UniProtKB"/>
</dbReference>
<dbReference type="GO" id="GO:1902036">
    <property type="term" value="P:regulation of hematopoietic stem cell differentiation"/>
    <property type="evidence" value="ECO:0000304"/>
    <property type="project" value="Reactome"/>
</dbReference>
<dbReference type="GO" id="GO:0060544">
    <property type="term" value="P:regulation of necroptotic process"/>
    <property type="evidence" value="ECO:0000304"/>
    <property type="project" value="Reactome"/>
</dbReference>
<dbReference type="GO" id="GO:0090085">
    <property type="term" value="P:regulation of protein deubiquitination"/>
    <property type="evidence" value="ECO:0000250"/>
    <property type="project" value="BHF-UCL"/>
</dbReference>
<dbReference type="GO" id="GO:0046718">
    <property type="term" value="P:symbiont entry into host cell"/>
    <property type="evidence" value="ECO:0000304"/>
    <property type="project" value="UniProtKB"/>
</dbReference>
<dbReference type="GO" id="GO:0002870">
    <property type="term" value="P:T cell anergy"/>
    <property type="evidence" value="ECO:0007669"/>
    <property type="project" value="Ensembl"/>
</dbReference>
<dbReference type="GO" id="GO:0006511">
    <property type="term" value="P:ubiquitin-dependent protein catabolic process"/>
    <property type="evidence" value="ECO:0000314"/>
    <property type="project" value="MGI"/>
</dbReference>
<dbReference type="CDD" id="cd04021">
    <property type="entry name" value="C2_E3_ubiquitin_ligase"/>
    <property type="match status" value="1"/>
</dbReference>
<dbReference type="CDD" id="cd00078">
    <property type="entry name" value="HECTc"/>
    <property type="match status" value="1"/>
</dbReference>
<dbReference type="CDD" id="cd00201">
    <property type="entry name" value="WW"/>
    <property type="match status" value="4"/>
</dbReference>
<dbReference type="FunFam" id="2.20.70.10:FF:000005">
    <property type="entry name" value="E3 ubiquitin-protein ligase"/>
    <property type="match status" value="1"/>
</dbReference>
<dbReference type="FunFam" id="2.20.70.10:FF:000009">
    <property type="entry name" value="E3 ubiquitin-protein ligase"/>
    <property type="match status" value="1"/>
</dbReference>
<dbReference type="FunFam" id="2.20.70.10:FF:000039">
    <property type="entry name" value="E3 ubiquitin-protein ligase"/>
    <property type="match status" value="1"/>
</dbReference>
<dbReference type="FunFam" id="2.60.40.150:FF:000092">
    <property type="entry name" value="E3 ubiquitin-protein ligase"/>
    <property type="match status" value="1"/>
</dbReference>
<dbReference type="FunFam" id="3.30.2160.10:FF:000003">
    <property type="entry name" value="E3 ubiquitin-protein ligase"/>
    <property type="match status" value="1"/>
</dbReference>
<dbReference type="FunFam" id="3.90.1750.10:FF:000002">
    <property type="entry name" value="E3 ubiquitin-protein ligase"/>
    <property type="match status" value="1"/>
</dbReference>
<dbReference type="FunFam" id="3.30.2410.10:FF:000002">
    <property type="entry name" value="E3 ubiquitin-protein ligase HECW2"/>
    <property type="match status" value="1"/>
</dbReference>
<dbReference type="FunFam" id="2.20.70.10:FF:000063">
    <property type="entry name" value="E3 ubiquitin-protein ligase NEDD4"/>
    <property type="match status" value="1"/>
</dbReference>
<dbReference type="Gene3D" id="2.20.70.10">
    <property type="match status" value="3"/>
</dbReference>
<dbReference type="Gene3D" id="2.60.40.150">
    <property type="entry name" value="C2 domain"/>
    <property type="match status" value="1"/>
</dbReference>
<dbReference type="Gene3D" id="3.30.2160.10">
    <property type="entry name" value="Hect, E3 ligase catalytic domain"/>
    <property type="match status" value="1"/>
</dbReference>
<dbReference type="Gene3D" id="3.30.2410.10">
    <property type="entry name" value="Hect, E3 ligase catalytic domain"/>
    <property type="match status" value="1"/>
</dbReference>
<dbReference type="Gene3D" id="3.90.1750.10">
    <property type="entry name" value="Hect, E3 ligase catalytic domains"/>
    <property type="match status" value="1"/>
</dbReference>
<dbReference type="IDEAL" id="IID00178"/>
<dbReference type="InterPro" id="IPR000008">
    <property type="entry name" value="C2_dom"/>
</dbReference>
<dbReference type="InterPro" id="IPR035892">
    <property type="entry name" value="C2_domain_sf"/>
</dbReference>
<dbReference type="InterPro" id="IPR024928">
    <property type="entry name" value="E3_ub_ligase_SMURF1"/>
</dbReference>
<dbReference type="InterPro" id="IPR050409">
    <property type="entry name" value="E3_ubiq-protein_ligase"/>
</dbReference>
<dbReference type="InterPro" id="IPR000569">
    <property type="entry name" value="HECT_dom"/>
</dbReference>
<dbReference type="InterPro" id="IPR035983">
    <property type="entry name" value="Hect_E3_ubiquitin_ligase"/>
</dbReference>
<dbReference type="InterPro" id="IPR001202">
    <property type="entry name" value="WW_dom"/>
</dbReference>
<dbReference type="InterPro" id="IPR036020">
    <property type="entry name" value="WW_dom_sf"/>
</dbReference>
<dbReference type="PANTHER" id="PTHR11254:SF66">
    <property type="entry name" value="E3 UBIQUITIN-PROTEIN LIGASE ITCHY HOMOLOG"/>
    <property type="match status" value="1"/>
</dbReference>
<dbReference type="PANTHER" id="PTHR11254">
    <property type="entry name" value="HECT DOMAIN UBIQUITIN-PROTEIN LIGASE"/>
    <property type="match status" value="1"/>
</dbReference>
<dbReference type="Pfam" id="PF00168">
    <property type="entry name" value="C2"/>
    <property type="match status" value="1"/>
</dbReference>
<dbReference type="Pfam" id="PF00632">
    <property type="entry name" value="HECT"/>
    <property type="match status" value="1"/>
</dbReference>
<dbReference type="Pfam" id="PF00397">
    <property type="entry name" value="WW"/>
    <property type="match status" value="4"/>
</dbReference>
<dbReference type="PIRSF" id="PIRSF001569">
    <property type="entry name" value="E3_ub_ligase_SMURF1"/>
    <property type="match status" value="1"/>
</dbReference>
<dbReference type="SMART" id="SM00239">
    <property type="entry name" value="C2"/>
    <property type="match status" value="1"/>
</dbReference>
<dbReference type="SMART" id="SM00119">
    <property type="entry name" value="HECTc"/>
    <property type="match status" value="1"/>
</dbReference>
<dbReference type="SMART" id="SM00456">
    <property type="entry name" value="WW"/>
    <property type="match status" value="4"/>
</dbReference>
<dbReference type="SUPFAM" id="SSF49562">
    <property type="entry name" value="C2 domain (Calcium/lipid-binding domain, CaLB)"/>
    <property type="match status" value="1"/>
</dbReference>
<dbReference type="SUPFAM" id="SSF56204">
    <property type="entry name" value="Hect, E3 ligase catalytic domain"/>
    <property type="match status" value="1"/>
</dbReference>
<dbReference type="SUPFAM" id="SSF51045">
    <property type="entry name" value="WW domain"/>
    <property type="match status" value="4"/>
</dbReference>
<dbReference type="PROSITE" id="PS50004">
    <property type="entry name" value="C2"/>
    <property type="match status" value="1"/>
</dbReference>
<dbReference type="PROSITE" id="PS50237">
    <property type="entry name" value="HECT"/>
    <property type="match status" value="1"/>
</dbReference>
<dbReference type="PROSITE" id="PS01159">
    <property type="entry name" value="WW_DOMAIN_1"/>
    <property type="match status" value="4"/>
</dbReference>
<dbReference type="PROSITE" id="PS50020">
    <property type="entry name" value="WW_DOMAIN_2"/>
    <property type="match status" value="4"/>
</dbReference>
<keyword id="KW-0002">3D-structure</keyword>
<keyword id="KW-0007">Acetylation</keyword>
<keyword id="KW-0025">Alternative splicing</keyword>
<keyword id="KW-0051">Antiviral defense</keyword>
<keyword id="KW-0053">Apoptosis</keyword>
<keyword id="KW-1003">Cell membrane</keyword>
<keyword id="KW-0963">Cytoplasm</keyword>
<keyword id="KW-0903">Direct protein sequencing</keyword>
<keyword id="KW-0967">Endosome</keyword>
<keyword id="KW-0945">Host-virus interaction</keyword>
<keyword id="KW-0391">Immunity</keyword>
<keyword id="KW-0399">Innate immunity</keyword>
<keyword id="KW-0472">Membrane</keyword>
<keyword id="KW-0539">Nucleus</keyword>
<keyword id="KW-0597">Phosphoprotein</keyword>
<keyword id="KW-1267">Proteomics identification</keyword>
<keyword id="KW-1185">Reference proteome</keyword>
<keyword id="KW-0677">Repeat</keyword>
<keyword id="KW-0808">Transferase</keyword>
<keyword id="KW-0832">Ubl conjugation</keyword>
<keyword id="KW-0833">Ubl conjugation pathway</keyword>
<organism evidence="59">
    <name type="scientific">Homo sapiens</name>
    <name type="common">Human</name>
    <dbReference type="NCBI Taxonomy" id="9606"/>
    <lineage>
        <taxon>Eukaryota</taxon>
        <taxon>Metazoa</taxon>
        <taxon>Chordata</taxon>
        <taxon>Craniata</taxon>
        <taxon>Vertebrata</taxon>
        <taxon>Euteleostomi</taxon>
        <taxon>Mammalia</taxon>
        <taxon>Eutheria</taxon>
        <taxon>Euarchontoglires</taxon>
        <taxon>Primates</taxon>
        <taxon>Haplorrhini</taxon>
        <taxon>Catarrhini</taxon>
        <taxon>Hominidae</taxon>
        <taxon>Homo</taxon>
    </lineage>
</organism>
<gene>
    <name type="primary">ITCH</name>
</gene>
<feature type="initiator methionine" description="Removed" evidence="60">
    <location>
        <position position="1"/>
    </location>
</feature>
<feature type="chain" id="PRO_0000120317" description="E3 ubiquitin-protein ligase Itchy homolog">
    <location>
        <begin position="2"/>
        <end position="903"/>
    </location>
</feature>
<feature type="domain" description="C2" evidence="3">
    <location>
        <begin position="1"/>
        <end position="115"/>
    </location>
</feature>
<feature type="domain" description="WW 1" evidence="5">
    <location>
        <begin position="326"/>
        <end position="359"/>
    </location>
</feature>
<feature type="domain" description="WW 2" evidence="5">
    <location>
        <begin position="358"/>
        <end position="391"/>
    </location>
</feature>
<feature type="domain" description="WW 3" evidence="5">
    <location>
        <begin position="438"/>
        <end position="471"/>
    </location>
</feature>
<feature type="domain" description="WW 4" evidence="5">
    <location>
        <begin position="478"/>
        <end position="511"/>
    </location>
</feature>
<feature type="domain" description="HECT" evidence="4">
    <location>
        <begin position="569"/>
        <end position="903"/>
    </location>
</feature>
<feature type="region of interest" description="Disordered" evidence="6">
    <location>
        <begin position="197"/>
        <end position="301"/>
    </location>
</feature>
<feature type="region of interest" description="Required for interaction with FYN" evidence="13">
    <location>
        <begin position="395"/>
        <end position="471"/>
    </location>
</feature>
<feature type="region of interest" description="MAP kinase docking site" evidence="1">
    <location>
        <begin position="574"/>
        <end position="583"/>
    </location>
</feature>
<feature type="compositionally biased region" description="Basic and acidic residues" evidence="6">
    <location>
        <begin position="206"/>
        <end position="215"/>
    </location>
</feature>
<feature type="compositionally biased region" description="Low complexity" evidence="6">
    <location>
        <begin position="236"/>
        <end position="247"/>
    </location>
</feature>
<feature type="compositionally biased region" description="Pro residues" evidence="6">
    <location>
        <begin position="251"/>
        <end position="265"/>
    </location>
</feature>
<feature type="compositionally biased region" description="Polar residues" evidence="6">
    <location>
        <begin position="270"/>
        <end position="281"/>
    </location>
</feature>
<feature type="compositionally biased region" description="Low complexity" evidence="6">
    <location>
        <begin position="282"/>
        <end position="298"/>
    </location>
</feature>
<feature type="active site" description="Glycyl thioester intermediate" evidence="4">
    <location>
        <position position="871"/>
    </location>
</feature>
<feature type="modified residue" description="N-acetylserine" evidence="60">
    <location>
        <position position="2"/>
    </location>
</feature>
<feature type="modified residue" description="Phosphoserine; by MAPK8" evidence="2">
    <location>
        <position position="240"/>
    </location>
</feature>
<feature type="modified residue" description="Phosphothreonine; by MAPK8" evidence="2">
    <location>
        <position position="263"/>
    </location>
</feature>
<feature type="modified residue" description="Phosphoserine; by MAPK8" evidence="2">
    <location>
        <position position="273"/>
    </location>
</feature>
<feature type="modified residue" description="Phosphothreonine; by SGK3" evidence="14">
    <location>
        <position position="385"/>
    </location>
</feature>
<feature type="modified residue" description="Phosphotyrosine; by FYN" evidence="13">
    <location>
        <position position="420"/>
    </location>
</feature>
<feature type="modified residue" description="Phosphoserine; by SGK3" evidence="14">
    <location>
        <position position="450"/>
    </location>
</feature>
<feature type="splice variant" id="VSP_044732" description="In isoform 3." evidence="51">
    <location>
        <begin position="1"/>
        <end position="110"/>
    </location>
</feature>
<feature type="splice variant" id="VSP_008451" description="In isoform 2 and isoform 3." evidence="50 51 52 53 54">
    <original>NGVSLCLPRLECNSAISAHCNLCLPGLSDSPISASRVAGFTG</original>
    <variation>S</variation>
    <location>
        <begin position="159"/>
        <end position="200"/>
    </location>
</feature>
<feature type="mutagenesis site" description="No effect on phosphorylation on T-cell stimulation nor in the presence of FYN." evidence="13">
    <original>Y</original>
    <variation>F</variation>
    <location>
        <position position="343"/>
    </location>
</feature>
<feature type="mutagenesis site" description="Greatly reduced phosphorylation on T-cell stimulation and in the presence of FYN. Increased ITCH-mediated Ub conjugation and degradation of JUNB." evidence="13">
    <original>Y</original>
    <variation>F</variation>
    <location>
        <position position="420"/>
    </location>
</feature>
<feature type="mutagenesis site" description="No effect on phosphorylation on T-cell stimulation nor in the presence of FYN." evidence="13">
    <original>Y</original>
    <variation>F</variation>
    <location>
        <position position="455"/>
    </location>
</feature>
<feature type="mutagenesis site" description="Loss of ubiquitin protein ligase activity. Results in altered endosomal sorting and reduced degradation of CXCR4. Unable to inhibit MAVS-induced activation of INFB." evidence="7 11 25 35 38">
    <original>C</original>
    <variation>A</variation>
    <location>
        <position position="871"/>
    </location>
</feature>
<feature type="sequence conflict" description="In Ref. 3; BAG64996." evidence="55" ref="3">
    <original>T</original>
    <variation>I</variation>
    <location>
        <position position="297"/>
    </location>
</feature>
<feature type="strand" evidence="63">
    <location>
        <begin position="18"/>
        <end position="29"/>
    </location>
</feature>
<feature type="strand" evidence="63">
    <location>
        <begin position="41"/>
        <end position="47"/>
    </location>
</feature>
<feature type="strand" evidence="63">
    <location>
        <begin position="50"/>
        <end position="53"/>
    </location>
</feature>
<feature type="strand" evidence="63">
    <location>
        <begin position="64"/>
        <end position="73"/>
    </location>
</feature>
<feature type="strand" evidence="63">
    <location>
        <begin position="78"/>
        <end position="85"/>
    </location>
</feature>
<feature type="strand" evidence="63">
    <location>
        <begin position="88"/>
        <end position="90"/>
    </location>
</feature>
<feature type="strand" evidence="63">
    <location>
        <begin position="93"/>
        <end position="101"/>
    </location>
</feature>
<feature type="helix" evidence="63">
    <location>
        <begin position="102"/>
        <end position="108"/>
    </location>
</feature>
<feature type="turn" evidence="63">
    <location>
        <begin position="109"/>
        <end position="111"/>
    </location>
</feature>
<feature type="strand" evidence="63">
    <location>
        <begin position="112"/>
        <end position="126"/>
    </location>
</feature>
<feature type="strand" evidence="63">
    <location>
        <begin position="130"/>
        <end position="143"/>
    </location>
</feature>
<feature type="strand" evidence="61">
    <location>
        <begin position="332"/>
        <end position="336"/>
    </location>
</feature>
<feature type="strand" evidence="61">
    <location>
        <begin position="342"/>
        <end position="346"/>
    </location>
</feature>
<feature type="turn" evidence="61">
    <location>
        <begin position="347"/>
        <end position="349"/>
    </location>
</feature>
<feature type="strand" evidence="61">
    <location>
        <begin position="352"/>
        <end position="355"/>
    </location>
</feature>
<feature type="strand" evidence="62">
    <location>
        <begin position="365"/>
        <end position="368"/>
    </location>
</feature>
<feature type="strand" evidence="62">
    <location>
        <begin position="374"/>
        <end position="377"/>
    </location>
</feature>
<feature type="strand" evidence="62">
    <location>
        <begin position="379"/>
        <end position="381"/>
    </location>
</feature>
<feature type="strand" evidence="66">
    <location>
        <begin position="444"/>
        <end position="448"/>
    </location>
</feature>
<feature type="strand" evidence="66">
    <location>
        <begin position="454"/>
        <end position="458"/>
    </location>
</feature>
<feature type="turn" evidence="66">
    <location>
        <begin position="459"/>
        <end position="462"/>
    </location>
</feature>
<feature type="strand" evidence="66">
    <location>
        <begin position="463"/>
        <end position="467"/>
    </location>
</feature>
<feature type="helix" evidence="67">
    <location>
        <begin position="469"/>
        <end position="471"/>
    </location>
</feature>
<feature type="strand" evidence="66">
    <location>
        <begin position="484"/>
        <end position="488"/>
    </location>
</feature>
<feature type="strand" evidence="66">
    <location>
        <begin position="494"/>
        <end position="498"/>
    </location>
</feature>
<feature type="turn" evidence="66">
    <location>
        <begin position="499"/>
        <end position="502"/>
    </location>
</feature>
<feature type="strand" evidence="66">
    <location>
        <begin position="503"/>
        <end position="507"/>
    </location>
</feature>
<feature type="turn" evidence="66">
    <location>
        <begin position="509"/>
        <end position="511"/>
    </location>
</feature>
<feature type="helix" evidence="64">
    <location>
        <begin position="528"/>
        <end position="539"/>
    </location>
</feature>
<feature type="turn" evidence="64">
    <location>
        <begin position="540"/>
        <end position="542"/>
    </location>
</feature>
<feature type="strand" evidence="64">
    <location>
        <begin position="545"/>
        <end position="551"/>
    </location>
</feature>
<feature type="strand" evidence="64">
    <location>
        <begin position="554"/>
        <end position="556"/>
    </location>
</feature>
<feature type="helix" evidence="64">
    <location>
        <begin position="557"/>
        <end position="567"/>
    </location>
</feature>
<feature type="helix" evidence="64">
    <location>
        <begin position="572"/>
        <end position="574"/>
    </location>
</feature>
<feature type="strand" evidence="64">
    <location>
        <begin position="575"/>
        <end position="580"/>
    </location>
</feature>
<feature type="helix" evidence="64">
    <location>
        <begin position="589"/>
        <end position="603"/>
    </location>
</feature>
<feature type="turn" evidence="64">
    <location>
        <begin position="607"/>
        <end position="609"/>
    </location>
</feature>
<feature type="strand" evidence="64">
    <location>
        <begin position="611"/>
        <end position="614"/>
    </location>
</feature>
<feature type="strand" evidence="64">
    <location>
        <begin position="621"/>
        <end position="624"/>
    </location>
</feature>
<feature type="helix" evidence="64">
    <location>
        <begin position="626"/>
        <end position="630"/>
    </location>
</feature>
<feature type="helix" evidence="64">
    <location>
        <begin position="634"/>
        <end position="650"/>
    </location>
</feature>
<feature type="helix" evidence="64">
    <location>
        <begin position="661"/>
        <end position="667"/>
    </location>
</feature>
<feature type="helix" evidence="64">
    <location>
        <begin position="675"/>
        <end position="677"/>
    </location>
</feature>
<feature type="turn" evidence="64">
    <location>
        <begin position="678"/>
        <end position="680"/>
    </location>
</feature>
<feature type="helix" evidence="64">
    <location>
        <begin position="682"/>
        <end position="692"/>
    </location>
</feature>
<feature type="helix" evidence="65">
    <location>
        <begin position="696"/>
        <end position="699"/>
    </location>
</feature>
<feature type="strand" evidence="65">
    <location>
        <begin position="704"/>
        <end position="709"/>
    </location>
</feature>
<feature type="strand" evidence="65">
    <location>
        <begin position="716"/>
        <end position="721"/>
    </location>
</feature>
<feature type="helix" evidence="65">
    <location>
        <begin position="724"/>
        <end position="726"/>
    </location>
</feature>
<feature type="turn" evidence="65">
    <location>
        <begin position="731"/>
        <end position="733"/>
    </location>
</feature>
<feature type="helix" evidence="64">
    <location>
        <begin position="735"/>
        <end position="747"/>
    </location>
</feature>
<feature type="helix" evidence="64">
    <location>
        <begin position="751"/>
        <end position="764"/>
    </location>
</feature>
<feature type="helix" evidence="64">
    <location>
        <begin position="767"/>
        <end position="770"/>
    </location>
</feature>
<feature type="helix" evidence="64">
    <location>
        <begin position="775"/>
        <end position="783"/>
    </location>
</feature>
<feature type="helix" evidence="64">
    <location>
        <begin position="790"/>
        <end position="795"/>
    </location>
</feature>
<feature type="strand" evidence="64">
    <location>
        <begin position="798"/>
        <end position="801"/>
    </location>
</feature>
<feature type="helix" evidence="64">
    <location>
        <begin position="807"/>
        <end position="818"/>
    </location>
</feature>
<feature type="helix" evidence="64">
    <location>
        <begin position="821"/>
        <end position="832"/>
    </location>
</feature>
<feature type="helix" evidence="64">
    <location>
        <begin position="842"/>
        <end position="844"/>
    </location>
</feature>
<feature type="strand" evidence="64">
    <location>
        <begin position="848"/>
        <end position="851"/>
    </location>
</feature>
<feature type="strand" evidence="64">
    <location>
        <begin position="855"/>
        <end position="858"/>
    </location>
</feature>
<feature type="strand" evidence="64">
    <location>
        <begin position="867"/>
        <end position="869"/>
    </location>
</feature>
<feature type="helix" evidence="64">
    <location>
        <begin position="870"/>
        <end position="872"/>
    </location>
</feature>
<feature type="strand" evidence="64">
    <location>
        <begin position="874"/>
        <end position="877"/>
    </location>
</feature>
<feature type="helix" evidence="64">
    <location>
        <begin position="883"/>
        <end position="895"/>
    </location>
</feature>
<evidence type="ECO:0000250" key="1"/>
<evidence type="ECO:0000250" key="2">
    <source>
        <dbReference type="UniProtKB" id="Q8C863"/>
    </source>
</evidence>
<evidence type="ECO:0000255" key="3">
    <source>
        <dbReference type="PROSITE-ProRule" id="PRU00041"/>
    </source>
</evidence>
<evidence type="ECO:0000255" key="4">
    <source>
        <dbReference type="PROSITE-ProRule" id="PRU00104"/>
    </source>
</evidence>
<evidence type="ECO:0000255" key="5">
    <source>
        <dbReference type="PROSITE-ProRule" id="PRU00224"/>
    </source>
</evidence>
<evidence type="ECO:0000256" key="6">
    <source>
        <dbReference type="SAM" id="MobiDB-lite"/>
    </source>
</evidence>
<evidence type="ECO:0000269" key="7">
    <source>
    </source>
</evidence>
<evidence type="ECO:0000269" key="8">
    <source>
    </source>
</evidence>
<evidence type="ECO:0000269" key="9">
    <source>
    </source>
</evidence>
<evidence type="ECO:0000269" key="10">
    <source>
    </source>
</evidence>
<evidence type="ECO:0000269" key="11">
    <source>
    </source>
</evidence>
<evidence type="ECO:0000269" key="12">
    <source>
    </source>
</evidence>
<evidence type="ECO:0000269" key="13">
    <source>
    </source>
</evidence>
<evidence type="ECO:0000269" key="14">
    <source>
    </source>
</evidence>
<evidence type="ECO:0000269" key="15">
    <source>
    </source>
</evidence>
<evidence type="ECO:0000269" key="16">
    <source>
    </source>
</evidence>
<evidence type="ECO:0000269" key="17">
    <source>
    </source>
</evidence>
<evidence type="ECO:0000269" key="18">
    <source>
    </source>
</evidence>
<evidence type="ECO:0000269" key="19">
    <source>
    </source>
</evidence>
<evidence type="ECO:0000269" key="20">
    <source>
    </source>
</evidence>
<evidence type="ECO:0000269" key="21">
    <source>
    </source>
</evidence>
<evidence type="ECO:0000269" key="22">
    <source>
    </source>
</evidence>
<evidence type="ECO:0000269" key="23">
    <source>
    </source>
</evidence>
<evidence type="ECO:0000269" key="24">
    <source>
    </source>
</evidence>
<evidence type="ECO:0000269" key="25">
    <source>
    </source>
</evidence>
<evidence type="ECO:0000269" key="26">
    <source>
    </source>
</evidence>
<evidence type="ECO:0000269" key="27">
    <source>
    </source>
</evidence>
<evidence type="ECO:0000269" key="28">
    <source>
    </source>
</evidence>
<evidence type="ECO:0000269" key="29">
    <source>
    </source>
</evidence>
<evidence type="ECO:0000269" key="30">
    <source>
    </source>
</evidence>
<evidence type="ECO:0000269" key="31">
    <source>
    </source>
</evidence>
<evidence type="ECO:0000269" key="32">
    <source>
    </source>
</evidence>
<evidence type="ECO:0000269" key="33">
    <source>
    </source>
</evidence>
<evidence type="ECO:0000269" key="34">
    <source>
    </source>
</evidence>
<evidence type="ECO:0000269" key="35">
    <source>
    </source>
</evidence>
<evidence type="ECO:0000269" key="36">
    <source>
    </source>
</evidence>
<evidence type="ECO:0000269" key="37">
    <source>
    </source>
</evidence>
<evidence type="ECO:0000269" key="38">
    <source>
    </source>
</evidence>
<evidence type="ECO:0000269" key="39">
    <source>
    </source>
</evidence>
<evidence type="ECO:0000269" key="40">
    <source>
    </source>
</evidence>
<evidence type="ECO:0000269" key="41">
    <source>
    </source>
</evidence>
<evidence type="ECO:0000269" key="42">
    <source>
    </source>
</evidence>
<evidence type="ECO:0000269" key="43">
    <source>
    </source>
</evidence>
<evidence type="ECO:0000269" key="44">
    <source>
    </source>
</evidence>
<evidence type="ECO:0000269" key="45">
    <source>
    </source>
</evidence>
<evidence type="ECO:0000269" key="46">
    <source>
    </source>
</evidence>
<evidence type="ECO:0000269" key="47">
    <source>
    </source>
</evidence>
<evidence type="ECO:0000269" key="48">
    <source>
    </source>
</evidence>
<evidence type="ECO:0000269" key="49">
    <source>
    </source>
</evidence>
<evidence type="ECO:0000303" key="50">
    <source>
    </source>
</evidence>
<evidence type="ECO:0000303" key="51">
    <source>
    </source>
</evidence>
<evidence type="ECO:0000303" key="52">
    <source>
    </source>
</evidence>
<evidence type="ECO:0000303" key="53">
    <source>
    </source>
</evidence>
<evidence type="ECO:0000303" key="54">
    <source ref="2"/>
</evidence>
<evidence type="ECO:0000305" key="55"/>
<evidence type="ECO:0000305" key="56">
    <source>
    </source>
</evidence>
<evidence type="ECO:0000305" key="57">
    <source>
    </source>
</evidence>
<evidence type="ECO:0000305" key="58">
    <source>
    </source>
</evidence>
<evidence type="ECO:0000312" key="59">
    <source>
        <dbReference type="Proteomes" id="UP000005640"/>
    </source>
</evidence>
<evidence type="ECO:0007744" key="60">
    <source>
    </source>
</evidence>
<evidence type="ECO:0007829" key="61">
    <source>
        <dbReference type="PDB" id="2DMV"/>
    </source>
</evidence>
<evidence type="ECO:0007829" key="62">
    <source>
        <dbReference type="PDB" id="2KYK"/>
    </source>
</evidence>
<evidence type="ECO:0007829" key="63">
    <source>
        <dbReference type="PDB" id="2NQ3"/>
    </source>
</evidence>
<evidence type="ECO:0007829" key="64">
    <source>
        <dbReference type="PDB" id="3TUG"/>
    </source>
</evidence>
<evidence type="ECO:0007829" key="65">
    <source>
        <dbReference type="PDB" id="5C7M"/>
    </source>
</evidence>
<evidence type="ECO:0007829" key="66">
    <source>
        <dbReference type="PDB" id="5CQ2"/>
    </source>
</evidence>
<evidence type="ECO:0007829" key="67">
    <source>
        <dbReference type="PDB" id="5DWS"/>
    </source>
</evidence>
<comment type="function">
    <text evidence="2 11 12 13 15 17 18 19 21 22 24 25 26 28 29 35 37 38 39 45 47">Acts as an Acts as an E3 ubiquitin-protein ligase which accepts ubiquitin from an E2 ubiquitin-conjugating enzyme in the form of a thioester and then directly transfers the ubiquitin to targeted substrates (PubMed:11046148, PubMed:14602072, PubMed:15051726, PubMed:16387660, PubMed:17028573, PubMed:18718448, PubMed:18718449, PubMed:19116316, PubMed:19592251, PubMed:19881509, PubMed:20068034, PubMed:20392206, PubMed:20491914, PubMed:23146885, PubMed:24790097, PubMed:25631046). Catalyzes 'Lys-29'-, 'Lys-48'- and 'Lys-63'-linked ubiquitin conjugation (PubMed:17028573, PubMed:18718448, PubMed:19131965, PubMed:19881509). Involved in the control of inflammatory signaling pathways (PubMed:19131965). Essential component of a ubiquitin-editing protein complex, comprising also TNFAIP3, TAX1BP1 and RNF11, that ensures the transient nature of inflammatory signaling pathways (PubMed:19131965). Promotes the association of the complex after TNF stimulation (PubMed:19131965). Once the complex is formed, TNFAIP3 deubiquitinates 'Lys-63' polyubiquitin chains on RIPK1 and catalyzes the formation of 'Lys-48'-polyubiquitin chains (PubMed:19131965). This leads to RIPK1 proteasomal degradation and consequently termination of the TNF- or LPS-mediated activation of NFKB1 (PubMed:19131965). Ubiquitinates RIPK2 by 'Lys-63'-linked conjugation and influences NOD2-dependent signal transduction pathways (PubMed:19592251). Regulates the transcriptional activity of several transcription factors, and probably plays an important role in the regulation of immune response (PubMed:18718448, PubMed:20491914). Ubiquitinates NFE2 by 'Lys-63' linkages and is implicated in the control of the development of hematopoietic lineages (PubMed:18718448). Mediates JUN ubiquitination and degradation (By similarity). Mediates JUNB ubiquitination and degradation (PubMed:16387660). Critical regulator of type 2 helper T (Th2) cell cytokine production by inducing JUNB ubiquitination and degradation (By similarity). Involved in the negative regulation of MAVS-dependent cellular antiviral responses (PubMed:19881509). Ubiquitinates MAVS through 'Lys-48'-linked conjugation resulting in MAVS proteasomal degradation (PubMed:19881509). Following ligand stimulation, regulates sorting of Wnt receptor FZD4 to the degradative endocytic pathway probably by modulating PI42KA activity (PubMed:23146885). Ubiquitinates PI4K2A and negatively regulates its catalytic activity (PubMed:23146885). Ubiquitinates chemokine receptor CXCR4 and regulates sorting of CXCR4 to the degradative endocytic pathway following ligand stimulation by ubiquitinating endosomal sorting complex required for transport ESCRT-0 components HGS and STAM (PubMed:14602072, PubMed:23146885, PubMed:34927784). Targets DTX1 for lysosomal degradation and controls NOTCH1 degradation, in the absence of ligand, through 'Lys-29'-linked polyubiquitination (PubMed:17028573, PubMed:18628966, PubMed:23886940). Ubiquitinates SNX9 (PubMed:20491914). Ubiquitinates MAP3K7 through 'Lys-48'-linked conjugation (By similarity). Together with UBR5, involved in the regulation of apoptosis and reactive oxygen species levels through the ubiquitination and proteasomal degradation of TXNIP: catalyzes 'Lys-48'-/'Lys-63'-branched ubiquitination of TXNIP (PubMed:20068034, PubMed:29378950). ITCH synthesizes 'Lys-63'-linked chains, while UBR5 is branching multiple 'Lys-48'-linked chains of substrate initially modified (PubMed:29378950). Mediates the antiapoptotic activity of epidermal growth factor through the ubiquitination and proteasomal degradation of p15 BID (PubMed:20392206). Ubiquitinates BRAT1 and this ubiquitination is enhanced in the presence of NDFIP1 (PubMed:25631046). Inhibits the replication of influenza A virus (IAV) via ubiquitination of IAV matrix protein 1 (M1) through 'Lys-48'-linked conjugation resulting in M1 proteasomal degradation (PubMed:30328013). Ubiquitinates NEDD9/HEF1, resulting in proteasomal degradation of NEDD9/HEF1 (PubMed:15051726).</text>
</comment>
<comment type="catalytic activity">
    <reaction evidence="11 13 15 17 18 19 21 24 25 26 28 29 35 38 39 45">
        <text>S-ubiquitinyl-[E2 ubiquitin-conjugating enzyme]-L-cysteine + [acceptor protein]-L-lysine = [E2 ubiquitin-conjugating enzyme]-L-cysteine + N(6)-ubiquitinyl-[acceptor protein]-L-lysine.</text>
        <dbReference type="EC" id="2.3.2.26"/>
    </reaction>
</comment>
<comment type="activity regulation">
    <text evidence="2 35 38 39">Activated by NDFIP1- and NDFIP2-binding (PubMed:25631046). Activated by PI4K2A-binding (PubMed:23146885). Inhibited by DTX3L-binding (PubMed:24790097). Inhibited by N4BP1 binding (By similarity).</text>
</comment>
<comment type="pathway">
    <text evidence="11 13 15 17 18 19 21 24 25 26 28 29 35 38 39 45">Protein modification; protein ubiquitination.</text>
</comment>
<comment type="subunit">
    <text evidence="2 8 9 10 11 12 13 14 15 16 18 21 22 23 25 26 28 29 31 32 33 34 35 36 37 38 40 42 48 49">Monomer. Part of a ternary complex composed of SMAD3, ITCH/AIP4 and NEDD9/HEF1; within the complex NEDD9/HEF1 interacts (via N-terminus) with ITCH/AIP4 (via WW domains); the complex mediates ubiquitination and proteasomal degradation of NEDD9/HEF1 (PubMed:15051726). Interacts (via WW domains) with OCNL (By similarity). Interacts (via WW domains) with NOTCH1 (By similarity). Interacts (via WW domains) with JUN (By similarity). Interacts with JUNB; the interaction promotes ITCH-mediated ubiquitination and degradation of JUNB (PubMed:16387660). Interacts with FYN; the interaction phosphorylates ITCH on Tyr-420 decreasing binding of JUNB (PubMed:16387660). Interacts (via WW domain 2) with N4BP1; the interaction inhibits the E3 ubiquitin-protein ligase activity (By similarity). Interacts with NDFIP1 and NDFIP2; this interaction activates the E3 ubiquitin-protein ligase and may induce its recruitment to exosomes (By similarity). Interacts with ARHGEF7 (PubMed:17652093). Interacts with RNF11 (PubMed:14559117, PubMed:19131965). Interacts (via the WW 1 domain) with NFE2 (via the PXY motif 1); the interaction promotes 'Lys-63'-linked ubiquitination of NFE2, retains it in the cytoplasm and prevents its transactivation activity (PubMed:11318614, PubMed:18718448). Interacts (via WW domains) with CXCR4 (via C-terminus); the interaction depends on CXCR4 phosphorylation (PubMed:19116316). Found in a complex with E3 ligase DTX3L and ESCRT-0 components HGS and STAM (PubMed:24790097). Interacts with DTX3L (via C-terminus); the interaction is increased upon CXCL12 stimulation and inhibits ITCH catalytic activity (the interaction is direct) (PubMed:24790097). Interacts with HGS (PubMed:14602072). Interacts (via WW domains) with PCBP2 within a complex containing ITCH, MAVS and PCBP2 (PubMed:19881509). Interacts (via WW domains) with TXNIP (via C-terminus) (PubMed:20068034). Interacts with p15 BID (PubMed:20392206). Interacts with ERBB4 (PubMed:20858735). Interacts with DTX1 (PubMed:17028573). Interacts with SPART (PubMed:19580544). Interacts with SNX9 and SNX18 (PubMed:20491914). Interacts (via its WW domains) with ATN1 (PubMed:9647693). Interacts (via WW domains) with SGK3 (PubMed:16888620). Interacts with CBLC (PubMed:12226085). Interacts with OTUD7B (PubMed:22179831). Interacts (via WW domain 1,2 and 3) with PI4K2A; the interaction inhibits PI4K2A catalytic activity and promotes ITCH catalytic activity (PubMed:23146885). Interacts with ARRDC4 (PubMed:23236378). Part of a complex containing ITCH, NDFIP1 and MAP3K7 (By similarity). Interacts with UBE2L3; the interaction is mediated by NDFIP1 (PubMed:25632008). Interacts with MAPK8/JNK1 (By similarity). Interacts (via WW domains) with ARRDC1 (via PPxY motifs); the interaction is direct and participates in the recruitment of the ubiquitin-protein ligase ITCH to the NOTCH1 receptor (PubMed:21191027, PubMed:23886940). Interacts (via WW domains) with ARRDC2 (PubMed:21191027). Interacts (via WW domains) with ARRDC3 (PubMed:21191027, PubMed:23886940). Interacts directly with LDLRAD3; this interaction promotes ITCH auto-ubiquitination leading to its degradation (PubMed:26854353). Interacts with ENTREP1; enhances the ubiquitination of CXCR4 by ITCH and its subsequent endocytosis (PubMed:34927784). Interacts with USP12 and WDR48/UAF1; the interaction is more efficient when both USP12 and WDR48/UAF1 are involved and may facilitate the recruitment of the USP12 deubiquitinase complex to Notch (PubMed:22778262).</text>
</comment>
<comment type="subunit">
    <text evidence="7">(Microbial infection) Interacts with Epstein-Barr virus LMP2A.</text>
</comment>
<comment type="subunit">
    <text evidence="41 46">(Microbial infection) Interacts with Human cytomegalovirus (HCMV) protein UL42; this interaction induces ubiquitination and degradation of ITCH.</text>
</comment>
<comment type="subunit">
    <text evidence="46">(Microbial infection) Interacts with herpesvirus 1 (HHV-1) UL56 protein; this interaction induces ubiquitination and probably degradation of ITCH.</text>
</comment>
<comment type="subunit">
    <text evidence="30">(Microbial infection) Interacts with herpesvirus 2 (HHV-2) UL56 protein.</text>
</comment>
<comment type="subunit">
    <text evidence="46">(Microbial infection) Interacts with varicella-zoster virus (VZV) Orf0 protein.</text>
</comment>
<comment type="subunit">
    <text evidence="46">(Microbial infection) Interacts with herpesvirus 6A (HHV-6A) U24 protein.</text>
</comment>
<comment type="subunit">
    <text evidence="43">(Microbial infection) Interacts with ebola virus protein VP40; this interaction is required for efficient viral egress from the infected cell.</text>
</comment>
<comment type="subunit">
    <text evidence="47">(Microbial infection) Interacts with influenza A virus matrix protein 1.</text>
</comment>
<comment type="subunit">
    <text evidence="44">(Microbial infection) Interacts with human herpesvirus 8 (KSHV) protein RTA/ORF50; this interaction targets viral vFLIP for proteasomal degradation.</text>
</comment>
<comment type="interaction">
    <interactant intactId="EBI-1564678">
        <id>Q96J02</id>
    </interactant>
    <interactant intactId="EBI-2339564">
        <id>Q8N5I2</id>
        <label>ARRDC1</label>
    </interactant>
    <organismsDiffer>false</organismsDiffer>
    <experiments>5</experiments>
</comment>
<comment type="interaction">
    <interactant intactId="EBI-1564678">
        <id>Q96J02</id>
    </interactant>
    <interactant intactId="EBI-2875665">
        <id>Q96B67</id>
        <label>ARRDC3</label>
    </interactant>
    <organismsDiffer>false</organismsDiffer>
    <experiments>5</experiments>
</comment>
<comment type="interaction">
    <interactant intactId="EBI-1564678">
        <id>Q96J02</id>
    </interactant>
    <interactant intactId="EBI-2117940">
        <id>Q9NQC7</id>
        <label>CYLD</label>
    </interactant>
    <organismsDiffer>false</organismsDiffer>
    <experiments>3</experiments>
</comment>
<comment type="interaction">
    <interactant intactId="EBI-1564678">
        <id>Q96J02</id>
    </interactant>
    <interactant intactId="EBI-8636612">
        <id>Q15884</id>
        <label>ENTREP1</label>
    </interactant>
    <organismsDiffer>false</organismsDiffer>
    <experiments>4</experiments>
</comment>
<comment type="interaction">
    <interactant intactId="EBI-1564678">
        <id>Q96J02</id>
    </interactant>
    <interactant intactId="EBI-308084">
        <id>P08151</id>
        <label>GLI1</label>
    </interactant>
    <organismsDiffer>false</organismsDiffer>
    <experiments>4</experiments>
</comment>
<comment type="interaction">
    <interactant intactId="EBI-1564678">
        <id>Q96J02</id>
    </interactant>
    <interactant intactId="EBI-2509726">
        <id>Q16655</id>
        <label>MLANA</label>
    </interactant>
    <organismsDiffer>false</organismsDiffer>
    <experiments>2</experiments>
</comment>
<comment type="interaction">
    <interactant intactId="EBI-1564678">
        <id>Q96J02</id>
    </interactant>
    <interactant intactId="EBI-5278391">
        <id>O75113</id>
        <label>N4BP1</label>
    </interactant>
    <organismsDiffer>false</organismsDiffer>
    <experiments>3</experiments>
</comment>
<comment type="interaction">
    <interactant intactId="EBI-1564678">
        <id>Q96J02</id>
    </interactant>
    <interactant intactId="EBI-3239392">
        <id>Q9BTU6</id>
        <label>PI4K2A</label>
    </interactant>
    <organismsDiffer>false</organismsDiffer>
    <experiments>5</experiments>
</comment>
<comment type="interaction">
    <interactant intactId="EBI-1564678">
        <id>Q96J02</id>
    </interactant>
    <interactant intactId="EBI-396669">
        <id>Q9Y3C5</id>
        <label>RNF11</label>
    </interactant>
    <organismsDiffer>false</organismsDiffer>
    <experiments>2</experiments>
</comment>
<comment type="interaction">
    <interactant intactId="EBI-1564678">
        <id>Q96J02</id>
    </interactant>
    <interactant intactId="EBI-722561">
        <id>Q96BY9</id>
        <label>SARAF</label>
    </interactant>
    <organismsDiffer>false</organismsDiffer>
    <experiments>2</experiments>
</comment>
<comment type="interaction">
    <interactant intactId="EBI-1564678">
        <id>Q96J02</id>
    </interactant>
    <interactant intactId="EBI-2801236">
        <id>Q96BR1</id>
        <label>SGK3</label>
    </interactant>
    <organismsDiffer>false</organismsDiffer>
    <experiments>5</experiments>
</comment>
<comment type="interaction">
    <interactant intactId="EBI-1564678">
        <id>Q96J02</id>
    </interactant>
    <interactant intactId="EBI-77848">
        <id>Q9Y5X1</id>
        <label>SNX9</label>
    </interactant>
    <organismsDiffer>false</organismsDiffer>
    <experiments>7</experiments>
</comment>
<comment type="interaction">
    <interactant intactId="EBI-1564678">
        <id>Q96J02</id>
    </interactant>
    <interactant intactId="EBI-726044">
        <id>Q9NW97</id>
        <label>TMEM51</label>
    </interactant>
    <organismsDiffer>false</organismsDiffer>
    <experiments>4</experiments>
</comment>
<comment type="interaction">
    <interactant intactId="EBI-1564678">
        <id>Q96J02</id>
    </interactant>
    <interactant intactId="EBI-77642">
        <id>Q13625</id>
        <label>TP53BP2</label>
    </interactant>
    <organismsDiffer>false</organismsDiffer>
    <experiments>2</experiments>
</comment>
<comment type="interaction">
    <interactant intactId="EBI-1564678">
        <id>Q96J02</id>
    </interactant>
    <interactant intactId="EBI-2337775">
        <id>Q9H3D4</id>
        <label>TP63</label>
    </interactant>
    <organismsDiffer>false</organismsDiffer>
    <experiments>2</experiments>
</comment>
<comment type="interaction">
    <interactant intactId="EBI-1564678">
        <id>Q96J02</id>
    </interactant>
    <interactant intactId="EBI-389606">
        <id>O15350</id>
        <label>TP73</label>
    </interactant>
    <organismsDiffer>false</organismsDiffer>
    <experiments>5</experiments>
</comment>
<comment type="interaction">
    <interactant intactId="EBI-1564678">
        <id>Q96J02</id>
    </interactant>
    <interactant intactId="EBI-389619">
        <id>O15350-1</id>
        <label>TP73</label>
    </interactant>
    <organismsDiffer>false</organismsDiffer>
    <experiments>5</experiments>
</comment>
<comment type="interaction">
    <interactant intactId="EBI-1564678">
        <id>Q96J02</id>
    </interactant>
    <interactant intactId="EBI-5651259">
        <id>O15350-8</id>
        <label>TP73</label>
    </interactant>
    <organismsDiffer>false</organismsDiffer>
    <experiments>2</experiments>
</comment>
<comment type="interaction">
    <interactant intactId="EBI-1564678">
        <id>Q96J02</id>
    </interactant>
    <interactant intactId="EBI-2116541">
        <id>Q9C0H2</id>
        <label>TTYH3</label>
    </interactant>
    <organismsDiffer>false</organismsDiffer>
    <experiments>2</experiments>
</comment>
<comment type="interaction">
    <interactant intactId="EBI-1564678">
        <id>Q96J02</id>
    </interactant>
    <interactant intactId="EBI-7181113">
        <id>P13285</id>
        <label>LMP2</label>
    </interactant>
    <organismsDiffer>true</organismsDiffer>
    <experiments>3</experiments>
</comment>
<comment type="interaction">
    <interactant intactId="EBI-1564678">
        <id>Q96J02</id>
    </interactant>
    <interactant intactId="EBI-7228115">
        <id>P03519</id>
        <label>M</label>
    </interactant>
    <organismsDiffer>true</organismsDiffer>
    <experiments>2</experiments>
</comment>
<comment type="interaction">
    <interactant intactId="EBI-1564678">
        <id>Q96J02</id>
    </interactant>
    <interactant intactId="EBI-40246327">
        <id>P04876</id>
        <label>M</label>
    </interactant>
    <organismsDiffer>true</organismsDiffer>
    <experiments>2</experiments>
</comment>
<comment type="interaction">
    <interactant intactId="EBI-1564678">
        <id>Q96J02</id>
    </interactant>
    <interactant intactId="EBI-40246199">
        <id>Q5K2K5</id>
        <label>M</label>
    </interactant>
    <organismsDiffer>true</organismsDiffer>
    <experiments>2</experiments>
</comment>
<comment type="interaction">
    <interactant intactId="EBI-1564678">
        <id>Q96J02</id>
    </interactant>
    <interactant intactId="EBI-40246300">
        <id>Q8B0H2</id>
        <label>M</label>
    </interactant>
    <organismsDiffer>true</organismsDiffer>
    <experiments>2</experiments>
</comment>
<comment type="interaction">
    <interactant intactId="EBI-1564678">
        <id>Q96J02</id>
    </interactant>
    <interactant intactId="EBI-40246273">
        <id>Q8B0H7</id>
        <label>M</label>
    </interactant>
    <organismsDiffer>true</organismsDiffer>
    <experiments>2</experiments>
</comment>
<comment type="interaction">
    <interactant intactId="EBI-1564678">
        <id>Q96J02</id>
    </interactant>
    <interactant intactId="EBI-40246247">
        <id>Q8B0I2</id>
        <label>M</label>
    </interactant>
    <organismsDiffer>true</organismsDiffer>
    <experiments>2</experiments>
</comment>
<comment type="interaction">
    <interactant intactId="EBI-1564678">
        <id>Q96J02</id>
    </interactant>
    <interactant intactId="EBI-3896014">
        <id>Q9QZS3-2</id>
        <label>Numb</label>
    </interactant>
    <organismsDiffer>true</organismsDiffer>
    <experiments>2</experiments>
</comment>
<comment type="interaction">
    <interactant intactId="EBI-1564678">
        <id>Q96J02</id>
    </interactant>
    <interactant intactId="EBI-40244030">
        <id>P35260</id>
        <label>VP40</label>
    </interactant>
    <organismsDiffer>true</organismsDiffer>
    <experiments>2</experiments>
</comment>
<comment type="interaction">
    <interactant intactId="EBI-1564678">
        <id>Q96J02</id>
    </interactant>
    <interactant intactId="EBI-40244005">
        <id>Q03040</id>
        <label>VP40</label>
    </interactant>
    <organismsDiffer>true</organismsDiffer>
    <experiments>2</experiments>
</comment>
<comment type="interaction">
    <interactant intactId="EBI-1564678">
        <id>Q96J02</id>
    </interactant>
    <interactant intactId="EBI-40243977">
        <id>Q1PD51</id>
        <label>VP40</label>
    </interactant>
    <organismsDiffer>true</organismsDiffer>
    <experiments>2</experiments>
</comment>
<comment type="interaction">
    <interactant intactId="EBI-1564678">
        <id>Q96J02</id>
    </interactant>
    <interactant intactId="EBI-40243950">
        <id>Q1PDC8</id>
        <label>VP40</label>
    </interactant>
    <organismsDiffer>true</organismsDiffer>
    <experiments>2</experiments>
</comment>
<comment type="interaction">
    <interactant intactId="EBI-1564678">
        <id>Q96J02</id>
    </interactant>
    <interactant intactId="EBI-38773572">
        <id>Q5XX06</id>
        <label>VP40</label>
    </interactant>
    <organismsDiffer>true</organismsDiffer>
    <experiments>2</experiments>
</comment>
<comment type="interaction">
    <interactant intactId="EBI-1564678">
        <id>Q96J02</id>
    </interactant>
    <interactant intactId="EBI-40243922">
        <id>Q6UY67</id>
        <label>VP40</label>
    </interactant>
    <organismsDiffer>true</organismsDiffer>
    <experiments>2</experiments>
</comment>
<comment type="interaction">
    <interactant intactId="EBI-6672198">
        <id>Q96J02-2</id>
    </interactant>
    <interactant intactId="EBI-489411">
        <id>P61073</id>
        <label>CXCR4</label>
    </interactant>
    <organismsDiffer>false</organismsDiffer>
    <experiments>3</experiments>
</comment>
<comment type="interaction">
    <interactant intactId="EBI-6672198">
        <id>Q96J02-2</id>
    </interactant>
    <interactant intactId="EBI-2117940">
        <id>Q9NQC7</id>
        <label>CYLD</label>
    </interactant>
    <organismsDiffer>false</organismsDiffer>
    <experiments>2</experiments>
</comment>
<comment type="interaction">
    <interactant intactId="EBI-6672198">
        <id>Q96J02-2</id>
    </interactant>
    <interactant intactId="EBI-8636612">
        <id>Q15884</id>
        <label>ENTREP1</label>
    </interactant>
    <organismsDiffer>false</organismsDiffer>
    <experiments>6</experiments>
</comment>
<comment type="interaction">
    <interactant intactId="EBI-6672198">
        <id>Q96J02-2</id>
    </interactant>
    <interactant intactId="EBI-80371">
        <id>Q15303</id>
        <label>ERBB4</label>
    </interactant>
    <organismsDiffer>false</organismsDiffer>
    <experiments>3</experiments>
</comment>
<comment type="interaction">
    <interactant intactId="EBI-6672198">
        <id>Q96J02-2</id>
    </interactant>
    <interactant intactId="EBI-15692884">
        <id>Q15303-3</id>
        <label>ERBB4</label>
    </interactant>
    <organismsDiffer>false</organismsDiffer>
    <experiments>2</experiments>
</comment>
<comment type="interaction">
    <interactant intactId="EBI-6672198">
        <id>Q96J02-2</id>
    </interactant>
    <interactant intactId="EBI-1055254">
        <id>Q8WXH2</id>
        <label>JPH3</label>
    </interactant>
    <organismsDiffer>false</organismsDiffer>
    <experiments>3</experiments>
</comment>
<comment type="subcellular location">
    <subcellularLocation>
        <location evidence="11">Cell membrane</location>
        <topology evidence="56">Peripheral membrane protein</topology>
        <orientation evidence="56">Cytoplasmic side</orientation>
    </subcellularLocation>
    <subcellularLocation>
        <location evidence="11">Cytoplasm</location>
    </subcellularLocation>
    <subcellularLocation>
        <location evidence="31">Nucleus</location>
    </subcellularLocation>
    <subcellularLocation>
        <location evidence="11 35 38">Early endosome membrane</location>
        <topology evidence="56 57 58">Peripheral membrane protein</topology>
        <orientation evidence="56 57 58">Cytoplasmic side</orientation>
    </subcellularLocation>
    <subcellularLocation>
        <location evidence="35">Endosome membrane</location>
        <topology evidence="57">Peripheral membrane protein</topology>
        <orientation evidence="57">Cytoplasmic side</orientation>
    </subcellularLocation>
    <text evidence="11 20 38">May be recruited to exosomes by NDFIP1 (PubMed:18819914). Localizes to plasma membrane upon CXCL12 stimulation where it co-localizes with CXCL4 (PubMed:14602072). Localization to early endosomes is increased upon CXCL12 stimulation where it co-localizes with DTX3L and CXCL4 (PubMed:24790097).</text>
</comment>
<comment type="alternative products">
    <event type="alternative splicing"/>
    <isoform>
        <id>Q96J02-1</id>
        <name>1</name>
        <sequence type="displayed"/>
    </isoform>
    <isoform>
        <id>Q96J02-2</id>
        <name>2</name>
        <sequence type="described" ref="VSP_008451"/>
    </isoform>
    <isoform>
        <id>Q96J02-3</id>
        <name>3</name>
        <sequence type="described" ref="VSP_044732 VSP_008451"/>
    </isoform>
</comment>
<comment type="tissue specificity">
    <text>Widely expressed.</text>
</comment>
<comment type="domain">
    <text evidence="32 48">The WW domains mediate interaction with PPxY motif-containing proteins.</text>
</comment>
<comment type="domain">
    <text evidence="48">The WW domain 4 mediates interaction with ENTREP1.</text>
</comment>
<comment type="PTM">
    <text evidence="1 9 13 14 19">On T-cell activation, phosphorylation by the JNK cascade on serine and threonine residues surrounding the PRR domain accelerates the ubiquitination and degradation of JUN and JUNB. The increased ITCH catalytic activity due to phosphorylation by JNK1 may occur due to a conformational change disrupting the interaction between the PRR/WW motifs domain and the HECT domain and, thus exposing the HECT domain (By similarity). Phosphorylation by FYN reduces interaction with JUNB and negatively controls JUN ubiquitination and degradation.</text>
</comment>
<comment type="PTM">
    <text evidence="19 21 35 38">Monoubiquitinated (PubMed:19116316). Autopolyubiquitinated with 'Lys-63' linkages which does not lead to protein degradation (PubMed:18718449, PubMed:23146885, PubMed:24790097).</text>
</comment>
<comment type="disease" evidence="27">
    <disease id="DI-02639">
        <name>Autoimmune disease, multisystem, with facial dysmorphism</name>
        <acronym>ADMFD</acronym>
        <description>A disorder characterized by organomegaly, failure to thrive, developmental delay, dysmorphic features and autoimmune inflammatory cell infiltration of the lungs, liver and gut.</description>
        <dbReference type="MIM" id="613385"/>
    </disease>
    <text>The disease is caused by variants affecting the gene represented in this entry.</text>
</comment>
<reference key="1">
    <citation type="journal article" date="2001" name="Genomics">
        <title>Human ITCH is a co-regulator of the hematopoietic transcription factor NF-E2.</title>
        <authorList>
            <person name="Chen X."/>
            <person name="Wen S.-C."/>
            <person name="Fukuda M.N."/>
            <person name="Gavva N.R."/>
            <person name="Hsu D.-W."/>
            <person name="Akama T.O."/>
            <person name="Yang-Peng T.L."/>
            <person name="Shen C.K.J."/>
        </authorList>
    </citation>
    <scope>NUCLEOTIDE SEQUENCE [MRNA] (ISOFORM 2)</scope>
    <scope>INTERACTION WITH NFE2</scope>
    <source>
        <tissue>Leukemia</tissue>
    </source>
</reference>
<reference key="2">
    <citation type="submission" date="2001-03" db="EMBL/GenBank/DDBJ databases">
        <title>Homo sapiens mRNA for ubiquitin protein ligase Itch, complete cds.</title>
        <authorList>
            <person name="Miyazaki K."/>
            <person name="Okamoto Y."/>
            <person name="Sakamoto M."/>
            <person name="Nakagawara A."/>
        </authorList>
    </citation>
    <scope>NUCLEOTIDE SEQUENCE [MRNA] (ISOFORM 2)</scope>
</reference>
<reference key="3">
    <citation type="journal article" date="2004" name="Nat. Genet.">
        <title>Complete sequencing and characterization of 21,243 full-length human cDNAs.</title>
        <authorList>
            <person name="Ota T."/>
            <person name="Suzuki Y."/>
            <person name="Nishikawa T."/>
            <person name="Otsuki T."/>
            <person name="Sugiyama T."/>
            <person name="Irie R."/>
            <person name="Wakamatsu A."/>
            <person name="Hayashi K."/>
            <person name="Sato H."/>
            <person name="Nagai K."/>
            <person name="Kimura K."/>
            <person name="Makita H."/>
            <person name="Sekine M."/>
            <person name="Obayashi M."/>
            <person name="Nishi T."/>
            <person name="Shibahara T."/>
            <person name="Tanaka T."/>
            <person name="Ishii S."/>
            <person name="Yamamoto J."/>
            <person name="Saito K."/>
            <person name="Kawai Y."/>
            <person name="Isono Y."/>
            <person name="Nakamura Y."/>
            <person name="Nagahari K."/>
            <person name="Murakami K."/>
            <person name="Yasuda T."/>
            <person name="Iwayanagi T."/>
            <person name="Wagatsuma M."/>
            <person name="Shiratori A."/>
            <person name="Sudo H."/>
            <person name="Hosoiri T."/>
            <person name="Kaku Y."/>
            <person name="Kodaira H."/>
            <person name="Kondo H."/>
            <person name="Sugawara M."/>
            <person name="Takahashi M."/>
            <person name="Kanda K."/>
            <person name="Yokoi T."/>
            <person name="Furuya T."/>
            <person name="Kikkawa E."/>
            <person name="Omura Y."/>
            <person name="Abe K."/>
            <person name="Kamihara K."/>
            <person name="Katsuta N."/>
            <person name="Sato K."/>
            <person name="Tanikawa M."/>
            <person name="Yamazaki M."/>
            <person name="Ninomiya K."/>
            <person name="Ishibashi T."/>
            <person name="Yamashita H."/>
            <person name="Murakawa K."/>
            <person name="Fujimori K."/>
            <person name="Tanai H."/>
            <person name="Kimata M."/>
            <person name="Watanabe M."/>
            <person name="Hiraoka S."/>
            <person name="Chiba Y."/>
            <person name="Ishida S."/>
            <person name="Ono Y."/>
            <person name="Takiguchi S."/>
            <person name="Watanabe S."/>
            <person name="Yosida M."/>
            <person name="Hotuta T."/>
            <person name="Kusano J."/>
            <person name="Kanehori K."/>
            <person name="Takahashi-Fujii A."/>
            <person name="Hara H."/>
            <person name="Tanase T.-O."/>
            <person name="Nomura Y."/>
            <person name="Togiya S."/>
            <person name="Komai F."/>
            <person name="Hara R."/>
            <person name="Takeuchi K."/>
            <person name="Arita M."/>
            <person name="Imose N."/>
            <person name="Musashino K."/>
            <person name="Yuuki H."/>
            <person name="Oshima A."/>
            <person name="Sasaki N."/>
            <person name="Aotsuka S."/>
            <person name="Yoshikawa Y."/>
            <person name="Matsunawa H."/>
            <person name="Ichihara T."/>
            <person name="Shiohata N."/>
            <person name="Sano S."/>
            <person name="Moriya S."/>
            <person name="Momiyama H."/>
            <person name="Satoh N."/>
            <person name="Takami S."/>
            <person name="Terashima Y."/>
            <person name="Suzuki O."/>
            <person name="Nakagawa S."/>
            <person name="Senoh A."/>
            <person name="Mizoguchi H."/>
            <person name="Goto Y."/>
            <person name="Shimizu F."/>
            <person name="Wakebe H."/>
            <person name="Hishigaki H."/>
            <person name="Watanabe T."/>
            <person name="Sugiyama A."/>
            <person name="Takemoto M."/>
            <person name="Kawakami B."/>
            <person name="Yamazaki M."/>
            <person name="Watanabe K."/>
            <person name="Kumagai A."/>
            <person name="Itakura S."/>
            <person name="Fukuzumi Y."/>
            <person name="Fujimori Y."/>
            <person name="Komiyama M."/>
            <person name="Tashiro H."/>
            <person name="Tanigami A."/>
            <person name="Fujiwara T."/>
            <person name="Ono T."/>
            <person name="Yamada K."/>
            <person name="Fujii Y."/>
            <person name="Ozaki K."/>
            <person name="Hirao M."/>
            <person name="Ohmori Y."/>
            <person name="Kawabata A."/>
            <person name="Hikiji T."/>
            <person name="Kobatake N."/>
            <person name="Inagaki H."/>
            <person name="Ikema Y."/>
            <person name="Okamoto S."/>
            <person name="Okitani R."/>
            <person name="Kawakami T."/>
            <person name="Noguchi S."/>
            <person name="Itoh T."/>
            <person name="Shigeta K."/>
            <person name="Senba T."/>
            <person name="Matsumura K."/>
            <person name="Nakajima Y."/>
            <person name="Mizuno T."/>
            <person name="Morinaga M."/>
            <person name="Sasaki M."/>
            <person name="Togashi T."/>
            <person name="Oyama M."/>
            <person name="Hata H."/>
            <person name="Watanabe M."/>
            <person name="Komatsu T."/>
            <person name="Mizushima-Sugano J."/>
            <person name="Satoh T."/>
            <person name="Shirai Y."/>
            <person name="Takahashi Y."/>
            <person name="Nakagawa K."/>
            <person name="Okumura K."/>
            <person name="Nagase T."/>
            <person name="Nomura N."/>
            <person name="Kikuchi H."/>
            <person name="Masuho Y."/>
            <person name="Yamashita R."/>
            <person name="Nakai K."/>
            <person name="Yada T."/>
            <person name="Nakamura Y."/>
            <person name="Ohara O."/>
            <person name="Isogai T."/>
            <person name="Sugano S."/>
        </authorList>
    </citation>
    <scope>NUCLEOTIDE SEQUENCE [LARGE SCALE MRNA] (ISOFORMS 2 AND 3)</scope>
    <source>
        <tissue>Trachea</tissue>
    </source>
</reference>
<reference key="4">
    <citation type="journal article" date="2001" name="Nature">
        <title>The DNA sequence and comparative analysis of human chromosome 20.</title>
        <authorList>
            <person name="Deloukas P."/>
            <person name="Matthews L.H."/>
            <person name="Ashurst J.L."/>
            <person name="Burton J."/>
            <person name="Gilbert J.G.R."/>
            <person name="Jones M."/>
            <person name="Stavrides G."/>
            <person name="Almeida J.P."/>
            <person name="Babbage A.K."/>
            <person name="Bagguley C.L."/>
            <person name="Bailey J."/>
            <person name="Barlow K.F."/>
            <person name="Bates K.N."/>
            <person name="Beard L.M."/>
            <person name="Beare D.M."/>
            <person name="Beasley O.P."/>
            <person name="Bird C.P."/>
            <person name="Blakey S.E."/>
            <person name="Bridgeman A.M."/>
            <person name="Brown A.J."/>
            <person name="Buck D."/>
            <person name="Burrill W.D."/>
            <person name="Butler A.P."/>
            <person name="Carder C."/>
            <person name="Carter N.P."/>
            <person name="Chapman J.C."/>
            <person name="Clamp M."/>
            <person name="Clark G."/>
            <person name="Clark L.N."/>
            <person name="Clark S.Y."/>
            <person name="Clee C.M."/>
            <person name="Clegg S."/>
            <person name="Cobley V.E."/>
            <person name="Collier R.E."/>
            <person name="Connor R.E."/>
            <person name="Corby N.R."/>
            <person name="Coulson A."/>
            <person name="Coville G.J."/>
            <person name="Deadman R."/>
            <person name="Dhami P.D."/>
            <person name="Dunn M."/>
            <person name="Ellington A.G."/>
            <person name="Frankland J.A."/>
            <person name="Fraser A."/>
            <person name="French L."/>
            <person name="Garner P."/>
            <person name="Grafham D.V."/>
            <person name="Griffiths C."/>
            <person name="Griffiths M.N.D."/>
            <person name="Gwilliam R."/>
            <person name="Hall R.E."/>
            <person name="Hammond S."/>
            <person name="Harley J.L."/>
            <person name="Heath P.D."/>
            <person name="Ho S."/>
            <person name="Holden J.L."/>
            <person name="Howden P.J."/>
            <person name="Huckle E."/>
            <person name="Hunt A.R."/>
            <person name="Hunt S.E."/>
            <person name="Jekosch K."/>
            <person name="Johnson C.M."/>
            <person name="Johnson D."/>
            <person name="Kay M.P."/>
            <person name="Kimberley A.M."/>
            <person name="King A."/>
            <person name="Knights A."/>
            <person name="Laird G.K."/>
            <person name="Lawlor S."/>
            <person name="Lehvaeslaiho M.H."/>
            <person name="Leversha M.A."/>
            <person name="Lloyd C."/>
            <person name="Lloyd D.M."/>
            <person name="Lovell J.D."/>
            <person name="Marsh V.L."/>
            <person name="Martin S.L."/>
            <person name="McConnachie L.J."/>
            <person name="McLay K."/>
            <person name="McMurray A.A."/>
            <person name="Milne S.A."/>
            <person name="Mistry D."/>
            <person name="Moore M.J.F."/>
            <person name="Mullikin J.C."/>
            <person name="Nickerson T."/>
            <person name="Oliver K."/>
            <person name="Parker A."/>
            <person name="Patel R."/>
            <person name="Pearce T.A.V."/>
            <person name="Peck A.I."/>
            <person name="Phillimore B.J.C.T."/>
            <person name="Prathalingam S.R."/>
            <person name="Plumb R.W."/>
            <person name="Ramsay H."/>
            <person name="Rice C.M."/>
            <person name="Ross M.T."/>
            <person name="Scott C.E."/>
            <person name="Sehra H.K."/>
            <person name="Shownkeen R."/>
            <person name="Sims S."/>
            <person name="Skuce C.D."/>
            <person name="Smith M.L."/>
            <person name="Soderlund C."/>
            <person name="Steward C.A."/>
            <person name="Sulston J.E."/>
            <person name="Swann R.M."/>
            <person name="Sycamore N."/>
            <person name="Taylor R."/>
            <person name="Tee L."/>
            <person name="Thomas D.W."/>
            <person name="Thorpe A."/>
            <person name="Tracey A."/>
            <person name="Tromans A.C."/>
            <person name="Vaudin M."/>
            <person name="Wall M."/>
            <person name="Wallis J.M."/>
            <person name="Whitehead S.L."/>
            <person name="Whittaker P."/>
            <person name="Willey D.L."/>
            <person name="Williams L."/>
            <person name="Williams S.A."/>
            <person name="Wilming L."/>
            <person name="Wray P.W."/>
            <person name="Hubbard T."/>
            <person name="Durbin R.M."/>
            <person name="Bentley D.R."/>
            <person name="Beck S."/>
            <person name="Rogers J."/>
        </authorList>
    </citation>
    <scope>NUCLEOTIDE SEQUENCE [LARGE SCALE GENOMIC DNA]</scope>
</reference>
<reference key="5">
    <citation type="submission" date="2005-09" db="EMBL/GenBank/DDBJ databases">
        <authorList>
            <person name="Mural R.J."/>
            <person name="Istrail S."/>
            <person name="Sutton G.G."/>
            <person name="Florea L."/>
            <person name="Halpern A.L."/>
            <person name="Mobarry C.M."/>
            <person name="Lippert R."/>
            <person name="Walenz B."/>
            <person name="Shatkay H."/>
            <person name="Dew I."/>
            <person name="Miller J.R."/>
            <person name="Flanigan M.J."/>
            <person name="Edwards N.J."/>
            <person name="Bolanos R."/>
            <person name="Fasulo D."/>
            <person name="Halldorsson B.V."/>
            <person name="Hannenhalli S."/>
            <person name="Turner R."/>
            <person name="Yooseph S."/>
            <person name="Lu F."/>
            <person name="Nusskern D.R."/>
            <person name="Shue B.C."/>
            <person name="Zheng X.H."/>
            <person name="Zhong F."/>
            <person name="Delcher A.L."/>
            <person name="Huson D.H."/>
            <person name="Kravitz S.A."/>
            <person name="Mouchard L."/>
            <person name="Reinert K."/>
            <person name="Remington K.A."/>
            <person name="Clark A.G."/>
            <person name="Waterman M.S."/>
            <person name="Eichler E.E."/>
            <person name="Adams M.D."/>
            <person name="Hunkapiller M.W."/>
            <person name="Myers E.W."/>
            <person name="Venter J.C."/>
        </authorList>
    </citation>
    <scope>NUCLEOTIDE SEQUENCE [LARGE SCALE GENOMIC DNA]</scope>
</reference>
<reference key="6">
    <citation type="journal article" date="2004" name="Genome Res.">
        <title>The status, quality, and expansion of the NIH full-length cDNA project: the Mammalian Gene Collection (MGC).</title>
        <authorList>
            <consortium name="The MGC Project Team"/>
        </authorList>
    </citation>
    <scope>NUCLEOTIDE SEQUENCE [LARGE SCALE MRNA] (ISOFORMS 1 AND 2)</scope>
    <source>
        <tissue>Kidney</tissue>
        <tissue>Placenta</tissue>
    </source>
</reference>
<reference key="7">
    <citation type="journal article" date="1998" name="Mol. Cell. Neurosci.">
        <title>Atrophin-1, the DRPLA gene product, interacts with two families of WW domain-containing proteins.</title>
        <authorList>
            <person name="Wood J.D."/>
            <person name="Yuan J."/>
            <person name="Margolis R.L."/>
            <person name="Colomer V."/>
            <person name="Duan K."/>
            <person name="Kushi J."/>
            <person name="Kaminsky Z."/>
            <person name="Kleiderlein J.J. Jr."/>
            <person name="Sharp A.H."/>
            <person name="Ross C.A."/>
        </authorList>
    </citation>
    <scope>NUCLEOTIDE SEQUENCE [MRNA] OF 83-903 (ISOFORM 2)</scope>
    <scope>INTERACTION WITH ATN1</scope>
    <source>
        <tissue>Fetal brain</tissue>
    </source>
</reference>
<reference key="8">
    <citation type="journal article" date="2000" name="Mol. Cell. Biol.">
        <title>Latent membrane protein 2A of Epstein-Barr virus binds WW domain E3 protein-ubiquitin ligases that ubiquitinate B-cell tyrosine kinases.</title>
        <authorList>
            <person name="Winberg G."/>
            <person name="Matskova L."/>
            <person name="Chen F."/>
            <person name="Plant P."/>
            <person name="Rotin D."/>
            <person name="Gish G."/>
            <person name="Ingham R."/>
            <person name="Ernberg I."/>
            <person name="Pawson T."/>
        </authorList>
    </citation>
    <scope>PROTEIN SEQUENCE OF 463-470; 503-510; 514-526; 644-665 AND 875-881</scope>
    <scope>INTERACTION WITH LMP2A</scope>
    <scope>MUTAGENESIS OF CYS-871</scope>
    <source>
        <tissue>B-cell</tissue>
    </source>
</reference>
<reference key="9">
    <citation type="journal article" date="2002" name="J. Biol. Chem.">
        <title>Interaction between two ubiquitin-protein isopeptide ligases of different classes, CBLC and AIP4/ITCH.</title>
        <authorList>
            <person name="Courbard J.-R."/>
            <person name="Fiore F."/>
            <person name="Adelaide J."/>
            <person name="Borg J.P."/>
            <person name="Birnbaum D."/>
            <person name="Ollendorff V."/>
        </authorList>
    </citation>
    <scope>INTERACTION WITH CBLC</scope>
    <scope>PHOSPHORYLATION</scope>
</reference>
<reference key="10">
    <citation type="journal article" date="2003" name="Biochim. Biophys. Acta">
        <title>The RING-H2 protein RNF11 is differentially expressed in breast tumours and interacts with HECT-type E3 ligases.</title>
        <authorList>
            <person name="Kitching R."/>
            <person name="Wong M.J."/>
            <person name="Koehler D."/>
            <person name="Burger A.M."/>
            <person name="Landberg G."/>
            <person name="Gish G."/>
            <person name="Seth A.K."/>
        </authorList>
    </citation>
    <scope>INTERACTION WITH RNF11</scope>
</reference>
<reference key="11">
    <citation type="journal article" date="2003" name="Dev. Cell">
        <title>The E3 ubiquitin ligase AIP4 mediates ubiquitination and sorting of the G protein-coupled receptor CXCR4.</title>
        <authorList>
            <person name="Marchese A."/>
            <person name="Raiborg C."/>
            <person name="Santini F."/>
            <person name="Keen J.H."/>
            <person name="Stenmark H."/>
            <person name="Benovic J.L."/>
        </authorList>
    </citation>
    <scope>FUNCTION</scope>
    <scope>CATALYTIC ACTIVITY</scope>
    <scope>PATHWAY</scope>
    <scope>SUBCELLULAR LOCATION</scope>
    <scope>INTERACTION WITH HGS</scope>
    <scope>MUTAGENESIS OF CYS-871</scope>
</reference>
<reference key="12">
    <citation type="journal article" date="2004" name="J. Biol. Chem.">
        <title>Atrophin-1-interacting protein 4/human Itch is a ubiquitin E3 ligase for human enhancer of filamentation 1 in transforming growth factor-beta signaling pathways.</title>
        <authorList>
            <person name="Feng L."/>
            <person name="Guedes S."/>
            <person name="Wang T."/>
        </authorList>
    </citation>
    <scope>FUNCTION</scope>
    <scope>IDENTIFICATION IN A COMPLEX WITH NEDD9 AND SMAD3</scope>
    <scope>INTERACTION WITH NEDD9</scope>
</reference>
<reference key="13">
    <citation type="journal article" date="2006" name="EMBO J.">
        <title>CISK attenuates degradation of the chemokine receptor CXCR4 via the ubiquitin ligase AIP4.</title>
        <authorList>
            <person name="Slagsvold T."/>
            <person name="Marchese A."/>
            <person name="Brech A."/>
            <person name="Stenmark H."/>
        </authorList>
    </citation>
    <scope>PHOSPHORYLATION AT THR-385 AND SER-450</scope>
    <scope>INTERACTION WITH SGK3</scope>
</reference>
<reference key="14">
    <citation type="journal article" date="2006" name="EMBO Rep.">
        <title>Itch/AIP4 mediates Deltex degradation through the formation of K29-linked polyubiquitin chains.</title>
        <authorList>
            <person name="Chastagner P."/>
            <person name="Israel A."/>
            <person name="Brou C."/>
        </authorList>
    </citation>
    <scope>FUNCTION</scope>
    <scope>CATALYTIC ACTIVITY</scope>
    <scope>PATHWAY</scope>
    <scope>INTERACTION WITH DTX1</scope>
    <scope>UBIQUITINATION OF DTX1</scope>
</reference>
<reference key="15">
    <citation type="journal article" date="2006" name="Mol. Cell">
        <title>Negative regulation of the E3 ubiquitin ligase itch via Fyn-mediated tyrosine phosphorylation.</title>
        <authorList>
            <person name="Yang C."/>
            <person name="Zhou W."/>
            <person name="Jeon M.S."/>
            <person name="Demydenko D."/>
            <person name="Harada Y."/>
            <person name="Zhou H."/>
            <person name="Liu Y.C."/>
        </authorList>
    </citation>
    <scope>FUNCTION</scope>
    <scope>CATALYTIC ACTIVITY</scope>
    <scope>PATHWAY</scope>
    <scope>INTERACTION WITH JUNB AND FYN</scope>
    <scope>PHOSPHORYLATION AT TYR-420</scope>
    <scope>IDENTIFICATION BY MASS SPECTROMETRY</scope>
    <scope>MUTAGENESIS OF TYR-343; TYR-420 AND TYR-455</scope>
</reference>
<reference key="16">
    <citation type="journal article" date="2008" name="Biochem. Biophys. Res. Commun.">
        <title>Itch regulates p45/NF-E2 in vivo by Lys63-linked ubiquitination.</title>
        <authorList>
            <person name="Lee T.-L."/>
            <person name="Shyu Y.-C."/>
            <person name="Hsu T.-Y."/>
            <person name="Shen C.-K.J."/>
        </authorList>
    </citation>
    <scope>FUNCTION</scope>
    <scope>CATALYTIC ACTIVITY</scope>
    <scope>PATHWAY</scope>
    <scope>INTERACTION WITH NFE2</scope>
</reference>
<reference key="17">
    <citation type="journal article" date="2008" name="Biochem. Pharmacol.">
        <title>Itch self-polyubiquitylation occurs through lysine-63 linkages.</title>
        <authorList>
            <person name="Scialpi F."/>
            <person name="Malatesta M."/>
            <person name="Peschiaroli A."/>
            <person name="Rossi M."/>
            <person name="Melino G."/>
            <person name="Bernassola F."/>
        </authorList>
    </citation>
    <scope>FUNCTION</scope>
    <scope>CATALYTIC ACTIVITY</scope>
    <scope>PATHWAY</scope>
    <scope>AUTOUBIQUITINATION</scope>
    <scope>IDENTIFICATION BY MASS SPECTROMETRY</scope>
</reference>
<reference key="18">
    <citation type="journal article" date="2008" name="J. Biol. Chem.">
        <title>Nedd4 family-interacting protein 1 (Ndfip1) is required for the exosomal secretion of Nedd4 family proteins.</title>
        <authorList>
            <person name="Putz U."/>
            <person name="Howitt J."/>
            <person name="Lackovic J."/>
            <person name="Foot N."/>
            <person name="Kumar S."/>
            <person name="Silke J."/>
            <person name="Tan S.S."/>
        </authorList>
    </citation>
    <scope>SUBCELLULAR LOCATION</scope>
</reference>
<reference key="19">
    <citation type="journal article" date="2008" name="PLoS ONE">
        <title>AIP4/Itch regulates Notch receptor degradation in the absence of ligand.</title>
        <authorList>
            <person name="Chastagner P."/>
            <person name="Israel A."/>
            <person name="Brou C."/>
        </authorList>
    </citation>
    <scope>FUNCTION</scope>
    <scope>CATALYTIC ACTIVITY</scope>
    <scope>PATHWAY</scope>
    <scope>UBIQUITINATION OF NOTCH1</scope>
</reference>
<reference key="20">
    <citation type="journal article" date="2009" name="Anal. Chem.">
        <title>Lys-N and trypsin cover complementary parts of the phosphoproteome in a refined SCX-based approach.</title>
        <authorList>
            <person name="Gauci S."/>
            <person name="Helbig A.O."/>
            <person name="Slijper M."/>
            <person name="Krijgsveld J."/>
            <person name="Heck A.J."/>
            <person name="Mohammed S."/>
        </authorList>
    </citation>
    <scope>ACETYLATION [LARGE SCALE ANALYSIS] AT SER-2</scope>
    <scope>CLEAVAGE OF INITIATOR METHIONINE [LARGE SCALE ANALYSIS]</scope>
    <scope>IDENTIFICATION BY MASS SPECTROMETRY [LARGE SCALE ANALYSIS]</scope>
</reference>
<reference key="21">
    <citation type="journal article" date="2009" name="Biochem. J.">
        <title>Endogenous spartin (SPG20) is recruited to endosomes and lipid droplets and interacts with the ubiquitin E3 ligases AIP4 and AIP5.</title>
        <authorList>
            <person name="Edwards T.L."/>
            <person name="Clowes V.E."/>
            <person name="Tsang H.T."/>
            <person name="Connell J.W."/>
            <person name="Sanderson C.M."/>
            <person name="Luzio J.P."/>
            <person name="Reid E."/>
        </authorList>
    </citation>
    <scope>INTERACTION WITH SPART</scope>
</reference>
<reference key="22">
    <citation type="journal article" date="2009" name="Curr. Biol.">
        <title>ITCH K63-ubiquitinates the NOD2 binding protein, RIP2, to influence inflammatory signaling pathways.</title>
        <authorList>
            <person name="Tao M."/>
            <person name="Scacheri P.C."/>
            <person name="Marinis J.M."/>
            <person name="Harhaj E.W."/>
            <person name="Matesic L.E."/>
            <person name="Abbott D.W."/>
        </authorList>
    </citation>
    <scope>FUNCTION</scope>
    <scope>CATALYTIC ACTIVITY</scope>
    <scope>PATHWAY</scope>
    <scope>UBIQUITINATION OF RIPK2</scope>
</reference>
<reference key="23">
    <citation type="journal article" date="2009" name="EMBO J.">
        <title>The ubiquitin-editing enzyme A20 requires RNF11 to downregulate NF-kappaB signalling.</title>
        <authorList>
            <person name="Shembade N."/>
            <person name="Parvatiyar K."/>
            <person name="Harhaj N.S."/>
            <person name="Harhaj E.W."/>
        </authorList>
    </citation>
    <scope>FUNCTION</scope>
    <scope>INTERACTION WITH RNF11</scope>
</reference>
<reference key="24">
    <citation type="journal article" date="2009" name="Mol. Biol. Cell">
        <title>The E3 ubiquitin ligase atrophin interacting protein 4 binds directly to the chemokine receptor CXCR4 via a novel WW domain-mediated interaction.</title>
        <authorList>
            <person name="Bhandari D."/>
            <person name="Robia S.L."/>
            <person name="Marchese A."/>
        </authorList>
    </citation>
    <scope>FUNCTION</scope>
    <scope>CATALYTIC ACTIVITY</scope>
    <scope>PATHWAY</scope>
    <scope>INTERACTION WITH CXCR4</scope>
    <scope>UBIQUITINATION</scope>
</reference>
<reference key="25">
    <citation type="journal article" date="2009" name="Nat. Immunol.">
        <title>PCBP2 mediates degradation of the adaptor MAVS via the HECT ubiquitin ligase AIP4.</title>
        <authorList>
            <person name="You F."/>
            <person name="Sun H."/>
            <person name="Zhou X."/>
            <person name="Sun W."/>
            <person name="Liang S."/>
            <person name="Zhai Z."/>
            <person name="Jiang Z."/>
        </authorList>
    </citation>
    <scope>FUNCTION</scope>
    <scope>CATALYTIC ACTIVITY</scope>
    <scope>PATHWAY</scope>
    <scope>UBIQUITINATION OF MAVS</scope>
    <scope>INTERACTION WITH PCBP2</scope>
    <scope>MUTAGENESIS OF CYS-871</scope>
</reference>
<reference key="26">
    <citation type="journal article" date="2010" name="Am. J. Hum. Genet.">
        <title>Human ITCH E3 ubiquitin ligase deficiency causes syndromic multisystem autoimmune disease.</title>
        <authorList>
            <person name="Lohr N.J."/>
            <person name="Molleston J.P."/>
            <person name="Strauss K.A."/>
            <person name="Torres-Martinez W."/>
            <person name="Sherman E.A."/>
            <person name="Squires R.H."/>
            <person name="Rider N.L."/>
            <person name="Chikwava K.R."/>
            <person name="Cummings O.W."/>
            <person name="Morton D.H."/>
            <person name="Puffenberger E.G."/>
        </authorList>
    </citation>
    <scope>INVOLVEMENT IN ADMFD</scope>
</reference>
<reference key="27">
    <citation type="journal article" date="2010" name="FEBS J.">
        <title>The E3 ubiquitin ligase Itch regulates sorting nexin 9 through an unconventional substrate recognition domain.</title>
        <authorList>
            <person name="Baumann C."/>
            <person name="Lindholm C.K."/>
            <person name="Rimoldi D."/>
            <person name="Levy F."/>
        </authorList>
    </citation>
    <scope>FUNCTION</scope>
    <scope>CATALYTIC ACTIVITY</scope>
    <scope>PATHWAY</scope>
    <scope>INTERACTION WITH SNX9 AND SNX18</scope>
    <scope>UBIQUITINATION OF SNX9</scope>
</reference>
<reference key="28">
    <citation type="journal article" date="2010" name="FEBS J.">
        <title>The ubiquitin ligase Itch mediates the antiapoptotic activity of epidermal growth factor by promoting the ubiquitylation and degradation of the truncated C-terminal portion of Bid.</title>
        <authorList>
            <person name="Azakir B.A."/>
            <person name="Desrochers G."/>
            <person name="Angers A."/>
        </authorList>
    </citation>
    <scope>FUNCTION</scope>
    <scope>CATALYTIC ACTIVITY</scope>
    <scope>PATHWAY</scope>
    <scope>INTERACTION WITH P15 BID</scope>
    <scope>UBIQUITINATION OF P15 BID</scope>
</reference>
<reference key="29">
    <citation type="journal article" date="2010" name="J. Biol. Chem.">
        <title>The ubiquitin ligase itch regulates apoptosis by targeting thioredoxin-interacting protein for ubiquitin-dependent degradation.</title>
        <authorList>
            <person name="Zhang P."/>
            <person name="Wang C."/>
            <person name="Gao K."/>
            <person name="Wang D."/>
            <person name="Mao J."/>
            <person name="An J."/>
            <person name="Xu C."/>
            <person name="Wu D."/>
            <person name="Yu H."/>
            <person name="Liu J.O."/>
            <person name="Yu L."/>
        </authorList>
    </citation>
    <scope>FUNCTION</scope>
    <scope>CATALYTIC ACTIVITY</scope>
    <scope>PATHWAY</scope>
    <scope>INTERACTION WITH TXNIP</scope>
    <scope>UBIQUITINATION OF TXNIP</scope>
</reference>
<reference key="30">
    <citation type="journal article" date="2010" name="Mol. Cancer Res.">
        <title>Interactions of ErbB4 and Kap1 connect the growth factor and DNA damage response pathways.</title>
        <authorList>
            <person name="Gilmore-Hebert M."/>
            <person name="Ramabhadran R."/>
            <person name="Stern D.F."/>
        </authorList>
    </citation>
    <scope>IDENTIFICATION BY MASS SPECTROMETRY</scope>
    <scope>INTERACTION WITH ERBB4</scope>
    <scope>SUBCELLULAR LOCATION</scope>
</reference>
<reference key="31">
    <citation type="journal article" date="2010" name="Virol. J.">
        <title>Herpes simplex virus UL56 interacts with and regulates the Nedd4-family ubiquitin ligase Itch.</title>
        <authorList>
            <person name="Ushijima Y."/>
            <person name="Luo C."/>
            <person name="Kamakura M."/>
            <person name="Goshima F."/>
            <person name="Kimura H."/>
            <person name="Nishiyama Y."/>
        </authorList>
    </citation>
    <scope>FUNCTION</scope>
    <scope>INTERACTION WITH HERPES SIMPLEX VIRUS 2 PROTEIN UL56</scope>
</reference>
<reference key="32">
    <citation type="journal article" date="2011" name="BMC Syst. Biol.">
        <title>Initial characterization of the human central proteome.</title>
        <authorList>
            <person name="Burkard T.R."/>
            <person name="Planyavsky M."/>
            <person name="Kaupe I."/>
            <person name="Breitwieser F.P."/>
            <person name="Buerckstuemmer T."/>
            <person name="Bennett K.L."/>
            <person name="Superti-Furga G."/>
            <person name="Colinge J."/>
        </authorList>
    </citation>
    <scope>IDENTIFICATION BY MASS SPECTROMETRY [LARGE SCALE ANALYSIS]</scope>
</reference>
<reference key="33">
    <citation type="journal article" date="2011" name="J. Virol.">
        <title>Multiple interactions between the ESCRT machinery and arrestin-related proteins: implications for PPXY-dependent budding.</title>
        <authorList>
            <person name="Rauch S."/>
            <person name="Martin-Serrano J."/>
        </authorList>
    </citation>
    <scope>INTERACTION WITH ARRDC1; ARRDC2 AND ARRDC3</scope>
    <scope>DOMAIN</scope>
</reference>
<reference key="34">
    <citation type="journal article" date="2012" name="EMBO Rep.">
        <title>Phosphatidylinositol 4-kinase IIalpha function at endosomes is regulated by the ubiquitin ligase Itch.</title>
        <authorList>
            <person name="Mossinger J."/>
            <person name="Wieffer M."/>
            <person name="Krause E."/>
            <person name="Freund C."/>
            <person name="Gerth F."/>
            <person name="Krauss M."/>
            <person name="Haucke V."/>
        </authorList>
    </citation>
    <scope>FUNCTION</scope>
    <scope>CATALYTIC ACTIVITY</scope>
    <scope>ACTIVITY REGULATION</scope>
    <scope>PATHWAY</scope>
    <scope>INTERACTION WITH PI4K2A</scope>
    <scope>SUBCELLULAR LOCATION</scope>
    <scope>UBIQUITINATION</scope>
    <scope>MUTAGENESIS OF CYS-871</scope>
</reference>
<reference key="35">
    <citation type="journal article" date="2012" name="J. Biol. Chem.">
        <title>The ubiquitin-specific protease 12 (USP12) is a negative regulator of notch signaling acting on notch receptor trafficking toward degradation.</title>
        <authorList>
            <person name="Moretti J."/>
            <person name="Chastagner P."/>
            <person name="Liang C.C."/>
            <person name="Cohn M.A."/>
            <person name="Israel A."/>
            <person name="Brou C."/>
        </authorList>
    </citation>
    <scope>INTERACTION WITH USP12 AND WDR48</scope>
</reference>
<reference key="36">
    <citation type="journal article" date="2012" name="Oncogene">
        <title>Deubiquitination of EGFR by Cezanne-1 contributes to cancer progression.</title>
        <authorList>
            <person name="Pareja F."/>
            <person name="Ferraro D.A."/>
            <person name="Rubin C."/>
            <person name="Cohen-Dvashi H."/>
            <person name="Zhang F."/>
            <person name="Aulmann S."/>
            <person name="Ben-Chetrit N."/>
            <person name="Pines G."/>
            <person name="Navon R."/>
            <person name="Crosetto N."/>
            <person name="Kostler W."/>
            <person name="Carvalho S."/>
            <person name="Lavi S."/>
            <person name="Schmitt F."/>
            <person name="Dikic I."/>
            <person name="Yakhini Z."/>
            <person name="Sinn P."/>
            <person name="Mills G.B."/>
            <person name="Yarden Y."/>
        </authorList>
    </citation>
    <scope>INTERACTION WITH OTUD7B</scope>
</reference>
<reference key="37">
    <citation type="journal article" date="2012" name="PLoS ONE">
        <title>Mammalian alpha arrestins link activated seven transmembrane receptors to Nedd4 family e3 ubiquitin ligases and interact with beta arrestins.</title>
        <authorList>
            <person name="Shea F.F."/>
            <person name="Rowell J.L."/>
            <person name="Li Y."/>
            <person name="Chang T.H."/>
            <person name="Alvarez C.E."/>
        </authorList>
    </citation>
    <scope>INTERACTION WITH ARRDC4</scope>
</reference>
<reference key="38">
    <citation type="journal article" date="2013" name="J. Cell Sci.">
        <title>Alpha-arrestin 1 (ARRDC1) and beta-arrestins cooperate to mediate Notch degradation in mammals.</title>
        <authorList>
            <person name="Puca L."/>
            <person name="Chastagner P."/>
            <person name="Meas-Yedid V."/>
            <person name="Israel A."/>
            <person name="Brou C."/>
        </authorList>
    </citation>
    <scope>FUNCTION</scope>
    <scope>INTERACTION WITH ARRDC1 AND ARRDC3</scope>
</reference>
<reference key="39">
    <citation type="journal article" date="2014" name="Mol. Biol. Cell">
        <title>The ubiquitin ligase deltex-3l regulates endosomal sorting of the G protein-coupled receptor CXCR4.</title>
        <authorList>
            <person name="Holleman J."/>
            <person name="Marchese A."/>
        </authorList>
    </citation>
    <scope>FUNCTION</scope>
    <scope>CATALYTIC ACTIVITY</scope>
    <scope>ACTIVITY REGULATION</scope>
    <scope>PATHWAY</scope>
    <scope>INTERACTION WITH DTX3L</scope>
    <scope>IDENTIFICATION IN A COMPLEX WITH DTX3L; STAM AND HGS</scope>
    <scope>SUBCELLULAR LOCATION</scope>
    <scope>MUTAGENESIS OF CYS-871</scope>
</reference>
<reference key="40">
    <citation type="journal article" date="2015" name="J. Biol. Chem.">
        <title>Nedd4 family interacting protein 1 (Ndfip1) is required for ubiquitination and nuclear trafficking of BRCA1-associated ATM activator 1 (BRAT1) during the DNA damage response.</title>
        <authorList>
            <person name="Low L.H."/>
            <person name="Chow Y.L."/>
            <person name="Li Y."/>
            <person name="Goh C.P."/>
            <person name="Putz U."/>
            <person name="Silke J."/>
            <person name="Ouchi T."/>
            <person name="Howitt J."/>
            <person name="Tan S.S."/>
        </authorList>
    </citation>
    <scope>FUNCTION IN UBIQUITINATION OF BRAT1</scope>
    <scope>CATALYTIC ACTIVITY</scope>
    <scope>ACTIVITY REGULATION</scope>
    <scope>PATHWAY</scope>
</reference>
<reference key="41">
    <citation type="journal article" date="2015" name="J. Immunol.">
        <title>Ndfip1 regulates itch ligase activity and airway inflammation via UbcH7.</title>
        <authorList>
            <person name="Kathania M."/>
            <person name="Zeng M."/>
            <person name="Yadav V.N."/>
            <person name="Moghaddam S.J."/>
            <person name="Yang B."/>
            <person name="Venuprasad K."/>
        </authorList>
    </citation>
    <scope>INTERACTION WITH UBE2L3</scope>
</reference>
<reference key="42">
    <citation type="journal article" date="2016" name="Biochemistry">
        <title>Regulation of Itch and Nedd4 E3 Ligase Activity and Degradation by LRAD3.</title>
        <authorList>
            <person name="Noyes N.C."/>
            <person name="Hampton B."/>
            <person name="Migliorini M."/>
            <person name="Strickland D.K."/>
        </authorList>
    </citation>
    <scope>INTERACTION WITH LDLRAD3</scope>
</reference>
<reference key="43">
    <citation type="journal article" date="2016" name="J. Virol.">
        <title>ITCH E3 Ubiquitin Ligase Interacts with Ebola Virus VP40 To Regulate Budding.</title>
        <authorList>
            <person name="Han Z."/>
            <person name="Sagum C.A."/>
            <person name="Bedford M.T."/>
            <person name="Sidhu S.S."/>
            <person name="Sudol M."/>
            <person name="Harty R.N."/>
        </authorList>
    </citation>
    <scope>INTERACTION WITH EBOLA VIRUS PROTEIN VP40 (MICROBIAL INFECTION)</scope>
</reference>
<reference key="44">
    <citation type="journal article" date="2016" name="J. Gen. Virol.">
        <title>Degradation of host ubiquitin E3 ligase Itch by human cytomegalovirus UL42.</title>
        <authorList>
            <person name="Koshizuka T."/>
            <person name="Tanaka K."/>
            <person name="Suzutani T."/>
        </authorList>
    </citation>
    <scope>INTERACTION WITH HCMV PROTEIN UL42 (MICROBIAL INFECTION)</scope>
</reference>
<reference key="45">
    <citation type="journal article" date="2017" name="Virology">
        <title>The Itch ubiquitin ligase is required for KSHV RTA induced vFLIP degradation.</title>
        <authorList>
            <person name="Chmura J.C."/>
            <person name="Herold K."/>
            <person name="Ruffin A."/>
            <person name="Atuobi T."/>
            <person name="Fabiyi Y."/>
            <person name="Mitchell A.E."/>
            <person name="Choi Y.B."/>
            <person name="Ehrlich E.S."/>
        </authorList>
    </citation>
    <scope>INTERACTION WITH HUMAN HERPESVIRUS 8 PROTEIN RTA/ORF50 (MICROBIAL INFECTION)</scope>
</reference>
<reference key="46">
    <citation type="journal article" date="2018" name="Proc. Natl. Acad. Sci. U.S.A.">
        <title>K63 ubiquitylation triggers proteasomal degradation by seeding branched ubiquitin chains.</title>
        <authorList>
            <person name="Ohtake F."/>
            <person name="Tsuchiya H."/>
            <person name="Saeki Y."/>
            <person name="Tanaka K."/>
        </authorList>
    </citation>
    <scope>FUNCTION</scope>
    <scope>CATALYTIC ACTIVITY</scope>
    <scope>PATHWAY</scope>
</reference>
<reference key="47">
    <citation type="journal article" date="2018" name="Sci. Rep.">
        <title>Herpesviruses possess conserved proteins for interaction with Nedd4 family ubiquitin E3 ligases.</title>
        <authorList>
            <person name="Koshizuka T."/>
            <person name="Kobayashi T."/>
            <person name="Ishioka K."/>
            <person name="Suzutani T."/>
        </authorList>
    </citation>
    <scope>INTERACTION WITH HHV-1 UL56 (MICROBIAL INFECTION)</scope>
    <scope>INTERACTION WITH VZV ORF0 (MICROBIAL INFECTION)</scope>
    <scope>INTERACTION WITH HCMV UL42 (MICROBIAL INFECTION)</scope>
    <scope>INTERACTION WITH HHV-6A U24 (MICROBIAL INFECTION)</scope>
</reference>
<reference key="48">
    <citation type="journal article" date="2018" name="Virol. Sin.">
        <title>CypA Regulates AIP4-Mediated M1 Ubiquitination of Influenza A Virus.</title>
        <authorList>
            <person name="Mahesutihan M."/>
            <person name="Zheng W."/>
            <person name="Cui L."/>
            <person name="Li Y."/>
            <person name="Jiao P."/>
            <person name="Yang W."/>
            <person name="Liu W."/>
            <person name="Li J."/>
            <person name="Fan W."/>
            <person name="Yang L."/>
            <person name="Liu W."/>
            <person name="Sun L."/>
        </authorList>
    </citation>
    <scope>FUNCTION</scope>
    <scope>INTERACTION WITH INFLUENZA A VIRUS MATRIX PROTEIN 1 (MICROBIAL INFECTION)</scope>
</reference>
<reference key="49">
    <citation type="journal article" date="2022" name="EMBO Rep.">
        <title>ENTREP/FAM189A2 encodes a new ITCH ubiquitin ligase activator that is downregulated in breast cancer.</title>
        <authorList>
            <person name="Tsunoda T."/>
            <person name="Riku M."/>
            <person name="Yamada N."/>
            <person name="Tsuchiya H."/>
            <person name="Tomita T."/>
            <person name="Suzuki M."/>
            <person name="Kizuki M."/>
            <person name="Inoko A."/>
            <person name="Ito H."/>
            <person name="Murotani K."/>
            <person name="Murakami H."/>
            <person name="Saeki Y."/>
            <person name="Kasai K."/>
        </authorList>
    </citation>
    <scope>FUNCTION</scope>
    <scope>INTERACTION WITH ENTREP1</scope>
    <scope>DOMAIN</scope>
</reference>
<reference key="50">
    <citation type="journal article" date="2007" name="J. Biol. Chem.">
        <title>A novel interaction between atrophin-interacting protein 4 and beta-p21-activated kinase-interactive exchange factor is mediated by an SH3 domain.</title>
        <authorList>
            <person name="Janz J.M."/>
            <person name="Sakmar T.P."/>
            <person name="Min K.C."/>
        </authorList>
    </citation>
    <scope>X-RAY CRYSTALLOGRAPHY (2.0 ANGSTROMS) OF 246-270 IN COMPLEX WITH ARHGEF7</scope>
</reference>
<reference key="51">
    <citation type="submission" date="2006-10" db="PDB data bank">
        <title>Solution structure of the second WW domain of ITCHY homolog E3 ubiquitin protein ligase (ITCH).</title>
        <authorList>
            <consortium name="RIKEN structural genomics initiative (RSGI)"/>
        </authorList>
    </citation>
    <scope>STRUCTURE BY NMR OF 328-357</scope>
</reference>
<accession>Q96J02</accession>
<accession>A6NEW4</accession>
<accession>B4E234</accession>
<accession>E1P5P3</accession>
<accession>F5H217</accession>
<accession>O43584</accession>
<accession>Q5QP37</accession>
<accession>Q5TEL0</accession>
<accession>Q96F66</accession>
<accession>Q9BY75</accession>
<accession>Q9H451</accession>
<accession>Q9H4U5</accession>
<protein>
    <recommendedName>
        <fullName>E3 ubiquitin-protein ligase Itchy homolog</fullName>
        <shortName>Itch</shortName>
        <ecNumber evidence="11 13 15 17 18 19 24">2.3.2.26</ecNumber>
    </recommendedName>
    <alternativeName>
        <fullName>Atrophin-1-interacting protein 4</fullName>
        <shortName>AIP4</shortName>
    </alternativeName>
    <alternativeName>
        <fullName>HECT-type E3 ubiquitin transferase Itchy homolog</fullName>
    </alternativeName>
    <alternativeName>
        <fullName>NFE2-associated polypeptide 1</fullName>
        <shortName>NAPP1</shortName>
    </alternativeName>
</protein>
<sequence length="903" mass="102803">MSDSGSQLGSMGSLTMKSQLQITVISAKLKENKKNWFGPSPYVEVTVDGQSKKTEKCNNTNSPKWKQPLTVIVTPVSKLHFRVWSHQTLKSDVLLGTAALDIYETLKSNNMKLEEVVVTLQLGGDKEPTETIGDLSICLDGLQLESEVVTNGETTCSENGVSLCLPRLECNSAISAHCNLCLPGLSDSPISASRVAGFTGASQNDDGSRSKDETRVSTNGSDDPEDAGAGENRRVSGNNSPSLSNGGFKPSRPPRPSRPPPPTPRRPASVNGSPSATSESDGSSTGSLPPTNTNTNTSEGATSGLIIPLTISGGSGPRPLNPVTQAPLPPGWEQRVDQHGRVYYVDHVEKRTTWDRPEPLPPGWERRVDNMGRIYYVDHFTRTTTWQRPTLESVRNYEQWQLQRSQLQGAMQQFNQRFIYGNQDLFATSQSKEFDPLGPLPPGWEKRTDSNGRVYFVNHNTRITQWEDPRSQGQLNEKPLPEGWEMRFTVDGIPYFVDHNRRTTTYIDPRTGKSALDNGPQIAYVRDFKAKVQYFRFWCQQLAMPQHIKITVTRKTLFEDSFQQIMSFSPQDLRRRLWVIFPGEEGLDYGGVAREWFFLLSHEVLNPMYCLFEYAGKDNYCLQINPASYINPDHLKYFRFIGRFIAMALFHGKFIDTGFSLPFYKRILNKPVGLKDLESIDPEFYNSLIWVKENNIEECDLEMYFSVDKEILGEIKSHDLKPNGGNILVTEENKEEYIRMVAEWRLSRGVEEQTQAFFEGFNEILPQQYLQYFDAKELEVLLCGMQEIDLNDWQRHAIYRHYARTSKQIMWFWQFVKEIDNEKRMRLLQFVTGTCRLPVGGFADLMGSNGPQKFCIEKVGKENWLPRSHTCFNRLDLPPYKSYEQLKEKLLFAIEETEGFGQE</sequence>